<keyword id="KW-0002">3D-structure</keyword>
<keyword id="KW-0007">Acetylation</keyword>
<keyword id="KW-1072">Activation of host autophagy by virus</keyword>
<keyword id="KW-0067">ATP-binding</keyword>
<keyword id="KW-0167">Capsid protein</keyword>
<keyword id="KW-1165">Clathrin-mediated endocytosis of virus by host</keyword>
<keyword id="KW-0165">Cleavage on pair of basic residues</keyword>
<keyword id="KW-0903">Direct protein sequencing</keyword>
<keyword id="KW-1015">Disulfide bond</keyword>
<keyword id="KW-1170">Fusion of virus membrane with host endosomal membrane</keyword>
<keyword id="KW-1168">Fusion of virus membrane with host membrane</keyword>
<keyword id="KW-0325">Glycoprotein</keyword>
<keyword id="KW-0347">Helicase</keyword>
<keyword id="KW-1035">Host cytoplasm</keyword>
<keyword id="KW-1038">Host endoplasmic reticulum</keyword>
<keyword id="KW-1043">Host membrane</keyword>
<keyword id="KW-1045">Host mitochondrion</keyword>
<keyword id="KW-1048">Host nucleus</keyword>
<keyword id="KW-0945">Host-virus interaction</keyword>
<keyword id="KW-0378">Hydrolase</keyword>
<keyword id="KW-1090">Inhibition of host innate immune response by virus</keyword>
<keyword id="KW-1114">Inhibition of host interferon signaling pathway by virus</keyword>
<keyword id="KW-1097">Inhibition of host MAVS by virus</keyword>
<keyword id="KW-1113">Inhibition of host RLR pathway by virus</keyword>
<keyword id="KW-1106">Inhibition of host STAT2 by virus</keyword>
<keyword id="KW-1112">Inhibition of host TYK2 by virus</keyword>
<keyword id="KW-0922">Interferon antiviral system evasion</keyword>
<keyword id="KW-0407">Ion channel</keyword>
<keyword id="KW-0406">Ion transport</keyword>
<keyword id="KW-0472">Membrane</keyword>
<keyword id="KW-0479">Metal-binding</keyword>
<keyword id="KW-0489">Methyltransferase</keyword>
<keyword id="KW-0506">mRNA capping</keyword>
<keyword id="KW-0507">mRNA processing</keyword>
<keyword id="KW-0511">Multifunctional enzyme</keyword>
<keyword id="KW-0547">Nucleotide-binding</keyword>
<keyword id="KW-0548">Nucleotidyltransferase</keyword>
<keyword id="KW-0597">Phosphoprotein</keyword>
<keyword id="KW-0645">Protease</keyword>
<keyword id="KW-0694">RNA-binding</keyword>
<keyword id="KW-0696">RNA-directed RNA polymerase</keyword>
<keyword id="KW-0949">S-adenosyl-L-methionine</keyword>
<keyword id="KW-0964">Secreted</keyword>
<keyword id="KW-0720">Serine protease</keyword>
<keyword id="KW-0941">Suppressor of RNA silencing</keyword>
<keyword id="KW-0804">Transcription</keyword>
<keyword id="KW-0805">Transcription regulation</keyword>
<keyword id="KW-0808">Transferase</keyword>
<keyword id="KW-0812">Transmembrane</keyword>
<keyword id="KW-1133">Transmembrane helix</keyword>
<keyword id="KW-0813">Transport</keyword>
<keyword id="KW-0832">Ubl conjugation</keyword>
<keyword id="KW-1161">Viral attachment to host cell</keyword>
<keyword id="KW-0261">Viral envelope protein</keyword>
<keyword id="KW-0899">Viral immunoevasion</keyword>
<keyword id="KW-1182">Viral ion channel</keyword>
<keyword id="KW-1162">Viral penetration into host cytoplasm</keyword>
<keyword id="KW-0693">Viral RNA replication</keyword>
<keyword id="KW-0946">Virion</keyword>
<keyword id="KW-1164">Virus endocytosis by host</keyword>
<keyword id="KW-1160">Virus entry into host cell</keyword>
<keyword id="KW-0862">Zinc</keyword>
<reference key="1">
    <citation type="journal article" date="1990" name="Virology">
        <title>Complete nucleotide sequence of dengue type 3 virus genome RNA.</title>
        <authorList>
            <person name="Osatomi K."/>
            <person name="Sumiyoshi H."/>
        </authorList>
    </citation>
    <scope>NUCLEOTIDE SEQUENCE [GENOMIC RNA]</scope>
    <scope>PARTIAL PROTEIN SEQUENCE</scope>
</reference>
<reference key="2">
    <citation type="journal article" date="2005" name="J. Virol.">
        <title>Variable surface epitopes in the crystal structure of dengue virus type 3 envelope glycoprotein.</title>
        <authorList>
            <person name="Modis Y."/>
            <person name="Ogata S."/>
            <person name="Clements D."/>
            <person name="Harrison S.C."/>
        </authorList>
    </citation>
    <scope>X-RAY CRYSTALLOGRAPHY (3.6 ANGSTROMS) OF 281-672</scope>
</reference>
<reference evidence="22 23" key="3">
    <citation type="journal article" date="2011" name="J. Biol. Chem.">
        <title>Small molecule inhibitors that selectively block dengue virus methyltransferase.</title>
        <authorList>
            <person name="Lim S.P."/>
            <person name="Sonntag L.S."/>
            <person name="Noble C."/>
            <person name="Nilar S.H."/>
            <person name="Ng R.H."/>
            <person name="Zou G."/>
            <person name="Monaghan P."/>
            <person name="Chung K.Y."/>
            <person name="Dong H."/>
            <person name="Liu B."/>
            <person name="Bodenreider C."/>
            <person name="Lee G."/>
            <person name="Ding M."/>
            <person name="Chan W.L."/>
            <person name="Wang G."/>
            <person name="Jian Y.L."/>
            <person name="Chao A.T."/>
            <person name="Lescar J."/>
            <person name="Yin Z."/>
            <person name="Vedananda T.R."/>
            <person name="Keller T.H."/>
            <person name="Shi P.Y."/>
        </authorList>
    </citation>
    <scope>X-RAY CRYSTALLOGRAPHY (1.70 ANGSTROMS) OF 2491-2752 IN COMPLEX WITH IRON-SULFUR (4FE-4S-S-ADOMET)</scope>
    <scope>CATALYTIC ACTIVITY (RNA-DIRECTED RNA POLYMERASE NS5)</scope>
    <scope>MUTAGENESIS OF PHE-2623; GLY-2638; ARG-2650; ARG-2653 AND LEU-2672</scope>
</reference>
<reference evidence="24" key="4">
    <citation type="journal article" date="2016" name="PLoS Pathog.">
        <title>Dengue virus nonstructural protein 5 (NS5) assembles into a dimer with a unique methyltransferase and polymerase interface.</title>
        <authorList>
            <person name="Klema V.J."/>
            <person name="Ye M."/>
            <person name="Hindupur A."/>
            <person name="Teramoto T."/>
            <person name="Gottipati K."/>
            <person name="Padmanabhan R."/>
            <person name="Choi K.H."/>
        </authorList>
    </citation>
    <scope>X-RAY CRYSTALLOGRAPHY (3.60 ANGSTROMS) OF 2491-3390</scope>
    <scope>SUBUNIT (RNA-DIRECTED RNA POLYMERASE NS5)</scope>
    <scope>CATALYTIC ACTIVITY (RNA-DIRECTED RNA POLYMERASE NS5)</scope>
</reference>
<sequence>MNNQRKKTGKPSINMLKRVRNRVSTGSQLAKRFSRGLLNGQGPMKLVMAFIAFLRFLAIPPTAGVLARWGTFKKSGAIKVLKGFKKEISNMLSIINKRKKTSLCLMMMLPATLAFHLTSRDGEPRMIVGKNERGKSLLFKTASGINMCTLIAMDLGEMCDDTVTYKCPHITEVEPEDIDCWCNLTSTWVTYGTCNQAGEHRRDKRSVALAPHVGMGLDTRTQTWMSAEGAWRQVEKVETWALRHPGFTILALFLAHYIGTSLTQKVVIFILLMLVTPSMTMRCVGVGNRDFVEGLSGATWVDVVLEHGGCVTTMAKNKPTLDIELQKTEATQLATLRKLCIEGKITNITTDSRCPTQGEAILPEEQDQNYVCKHTYVDRGWGNGCGLFGKGSLVTCAKFQCLESIEGKVVQHENLKYTVIITVHTGDQHQVGNETQGVTAEITSQASTAEAILPEYGTLGLECSPRTGLDFNEMILLTMKNKAWMVHRQWFFDLPLPWTSGATTKTPTWNRKELLVTFKNAHAKKQEVVVLGSQEGAMHTALTGATEIQTSGGTSIFAGHLKCRLKMDKLKLKGMSYAMCLNTFVLKKEVSETQHGTILIKVEYKGEDAPCKIPFSTEDGQGKAHNGRLITANPVVTKKEEPVNIEAEPPFGESNIVIGIGDKALKINWYRKGSSIGKMFEATARGARRMAILGDTAWDFGSVGGVLNSLGKMVHQIFGSAYTALFSGVSWIMKIGIGVLLTWIGLNSKNTSMSFSCIAIGIITLYLGVVVQADMGCVINWKGKELKCGSGIFVTNEVHTWTEQYKFQADSPKRVATAIAGAWENGVCGIRSTTRMENLLWKQIANELNYILWENDIKLTVVVGDITGVLEQGKRTLTPQPMELKYSWKTWGLAKIVTAETQNSSFIIDGPSTPECPSASRAWNVWEVEDYGFGVFTTNIWLKLREVYTQLCDHRLMSAAVKDERAVHADMGYWIESQKNGSWKLEKASLIEVKTCTWPKSHTLWSNGVLESDMIIPKSLAGPISQHNHRPGYHTQTAGPWHLGKLELDFNYCEGTTVVISENCGTRGPSLRTTTVSGKLIHEWCCRSCTLPPLRYMGEDGCWYGMEIRPINEKEENMVKSLASAGSGKVDNFTMGVLCLAILFEEVMRGKFGKKHMIAGVLFTFVLLLSGQITWRGMAHTLIMIGSNASDRMGMGVTYLALIATFKIQPFLALGFFLRKLTSRENLLLGVGLAMAATLRLPEDIEQMANGIALGLMALKLITQFETYQLWTALVSLTCSNTIFTLTVAWRTATLILAGISLLPVCQSSSMRKTDWLPMTVAAMGVPPLPLFIFSLKDTLKRRSWPLNEGVMAVGLVSILASSLLRNDVPMAGPLVAGGLLIACYVITGTSADLTVEKAADVTWEEEAEQTGVSHNLMITVDDDGTMRIKDDETENILTVLLKTALLIVSGIFPYSIPATMLVWHTWQKQTQRSGVLWDVPSPPETQKAELEEGVYRIKQQGIFGKTQVGVGVQKEGVFHTMWHVTRGAVLTHNGKRLEPNWASVKKDLISYGGGWRLSAQWQKGEEVQVIAVEPGKNPKNFQTMPGIFQTTTGEIGAIALDFKPGTSGSPIINREGKVVGLYGNGVVTKNGGYVSGIAQTNAEPDGPTPELEEEMFKKRNLTIMDLHPGSGKTRKYLPAIVREAIKRRLRTLILAPTRVVAAEMEEAMKGLPIRYQTTATKSEHTGREIVDLMCHATFTMRLLSPVRVPNYNLIIMDEAHFTDPASIAARGYISTRVGMGEAAAIFMTATPPGTADAFPQSNAPIQDEERDIPERSWNSGNEWITDFVGKTVWFVPSIKAGNVIANCLRKNGKKVIQLSRKTFDTEYQKTKLNDWDFVVTTDISEMGANFIADRVIDPRRCLKPVILTDGPERVILAGPMPVTVASAAQRRGRVGRNPQKENDQYIFMGQPLNKDEDHAHWTEAKMLLDNINTPEGIIPALFEPEREKSAAIDGEYRLKGESRKTFVELMRRGDLPVWLAHKVASEGIKYTDRKWCFDGERNNQILEENMDVEIWTKEGEKKKLRPRWLDARTYSDPLALKEFKDFAAGRKSIALDLVTEIGRVPSHLAHRTRNALDNLVMLHTSEHGGRAYRHAVEELPETMETLLLLGLMILLTGGAMLFLISGKGIGKTSIGLICVIASSGMLWMADVPLQWIASAIVLEFFMMVLLIPEPEKQRTPQDNQLAYVVIGILTLAAIVAANEMGLLETTKRDLGMSKEPGVVSPTSYLDVDLHPASAWTLYAVATTVITPMLRHTIENSTANVSLAAIANQAVVLMGLDKGWPISKMDLGVPLLALGCYSQVNPLTLIAAVLLLVTHYAIIGPGLQAKATREAQKRTAAGIMKNPTVDGIMTIDLDPVIYDSKFEKQLGQVMLLVLCAVQLLLMRTSWALCEVLTLATGPITTLWEGSPGKFWNTTIAVSMANIFRGSYLAGAGLALSIMKSVGTGKRGTGSQGETLGEKWKKKLNQLSRKEFDLYKKSGITEVDRTEAKEGLKRGEITHHAVSRGSAKLQWFVERNMVIPEGRVIDLGCGRGGWSYYCAGLKKVTEVRGYTKGGPGHEEPVPMSTYGWNIVKLMSGKDVFYLPPEKCDTLLCDIGESSPSPTVEESRTIRVLKMVEPWLKNNQFCIKVLNPYMPTVIEHLERLQRKHGGMLVRNPLSRNSTHEMYWISNGTGNIVSSVNMVSRLLLNRFTMTHRRPTIEKDVDLGAGTRHVNAEPETPNMDVIGERIKRIKEEHSSTWHYDDENPYKTWAYHGSYEVKATGSASSMINGVVKLLTKPWDVVPMVTQMAMTDTTPFGQQRVFKEKVDTRTPRPMPGTRKVMEITAEWLWRTLGRNKRPRLCTREEFTKKVRTNAAMGAVFTEENQWDSARAAVEDEEFWKLVDRERELHKLGKCGSCVYNMMGKREKKLGEFGKAKGSRAIWYMWLGARYLEFEALGFLNEDHWFSRENSYSGVEGEGLHKLGYILRDISKIPGGAMYADDTAGWDTRITEDDLHNEEKITQQMDPEHRQLANAIFKLTYQNKVVKVQRPTPKGTVMDIISRKDQRGSGQVGTYGLNTFTNMEAQLIRQMEGEGVLSKADLENPHPLEKKITQWLETKGVERLKRMAISGDDCVVKPIDDRFANALLALNDMGKVRKDIPQWQPSKGWHDWQQVPFCSHHFHELIMKDGRKLVVPCRPQDELIGRARISQGAGWSLRETACLGKAYAQMWTLMYFHRRDLRLASNAICSAVPVHWVPTSRTTWSIHAHHQWMTTEDMLTVWNRVWIEDNPWMEDKTPVTTWEDVPYLGKREDQWCGSLIGLTSRATWAQNILTAIQQVRSLIGNEEFLDYMPSMKRFRKEEESEGAIW</sequence>
<proteinExistence type="evidence at protein level"/>
<evidence type="ECO:0000250" key="1">
    <source>
        <dbReference type="UniProtKB" id="P03314"/>
    </source>
</evidence>
<evidence type="ECO:0000250" key="2">
    <source>
        <dbReference type="UniProtKB" id="P14335"/>
    </source>
</evidence>
<evidence type="ECO:0000250" key="3">
    <source>
        <dbReference type="UniProtKB" id="P14336"/>
    </source>
</evidence>
<evidence type="ECO:0000250" key="4">
    <source>
        <dbReference type="UniProtKB" id="P14340"/>
    </source>
</evidence>
<evidence type="ECO:0000250" key="5">
    <source>
        <dbReference type="UniProtKB" id="P17763"/>
    </source>
</evidence>
<evidence type="ECO:0000250" key="6">
    <source>
        <dbReference type="UniProtKB" id="P29990"/>
    </source>
</evidence>
<evidence type="ECO:0000250" key="7">
    <source>
        <dbReference type="UniProtKB" id="P29991"/>
    </source>
</evidence>
<evidence type="ECO:0000250" key="8">
    <source>
        <dbReference type="UniProtKB" id="Q32ZE1"/>
    </source>
</evidence>
<evidence type="ECO:0000250" key="9">
    <source>
        <dbReference type="UniProtKB" id="Q6YMS4"/>
    </source>
</evidence>
<evidence type="ECO:0000250" key="10">
    <source>
        <dbReference type="UniProtKB" id="Q9Q6P4"/>
    </source>
</evidence>
<evidence type="ECO:0000255" key="11"/>
<evidence type="ECO:0000255" key="12">
    <source>
        <dbReference type="PROSITE-ProRule" id="PRU00498"/>
    </source>
</evidence>
<evidence type="ECO:0000255" key="13">
    <source>
        <dbReference type="PROSITE-ProRule" id="PRU00539"/>
    </source>
</evidence>
<evidence type="ECO:0000255" key="14">
    <source>
        <dbReference type="PROSITE-ProRule" id="PRU00541"/>
    </source>
</evidence>
<evidence type="ECO:0000255" key="15">
    <source>
        <dbReference type="PROSITE-ProRule" id="PRU00542"/>
    </source>
</evidence>
<evidence type="ECO:0000255" key="16">
    <source>
        <dbReference type="PROSITE-ProRule" id="PRU00859"/>
    </source>
</evidence>
<evidence type="ECO:0000255" key="17">
    <source>
        <dbReference type="PROSITE-ProRule" id="PRU00860"/>
    </source>
</evidence>
<evidence type="ECO:0000255" key="18">
    <source>
        <dbReference type="PROSITE-ProRule" id="PRU00924"/>
    </source>
</evidence>
<evidence type="ECO:0000269" key="19">
    <source>
    </source>
</evidence>
<evidence type="ECO:0000269" key="20">
    <source>
    </source>
</evidence>
<evidence type="ECO:0000269" key="21">
    <source>
    </source>
</evidence>
<evidence type="ECO:0007744" key="22">
    <source>
        <dbReference type="PDB" id="3P8Z"/>
    </source>
</evidence>
<evidence type="ECO:0007744" key="23">
    <source>
        <dbReference type="PDB" id="3P97"/>
    </source>
</evidence>
<evidence type="ECO:0007744" key="24">
    <source>
        <dbReference type="PDB" id="5CCV"/>
    </source>
</evidence>
<evidence type="ECO:0007829" key="25">
    <source>
        <dbReference type="PDB" id="1UZG"/>
    </source>
</evidence>
<evidence type="ECO:0007829" key="26">
    <source>
        <dbReference type="PDB" id="3VTT"/>
    </source>
</evidence>
<evidence type="ECO:0007829" key="27">
    <source>
        <dbReference type="PDB" id="5EHI"/>
    </source>
</evidence>
<evidence type="ECO:0007829" key="28">
    <source>
        <dbReference type="PDB" id="7A3S"/>
    </source>
</evidence>
<evidence type="ECO:0007829" key="29">
    <source>
        <dbReference type="PDB" id="7A3T"/>
    </source>
</evidence>
<name>POLG_DEN3P</name>
<feature type="chain" id="PRO_0000405221" description="Genome polyprotein">
    <location>
        <begin position="1"/>
        <end position="3390"/>
    </location>
</feature>
<feature type="chain" id="PRO_0000037989" description="Capsid protein C" evidence="6">
    <location>
        <begin position="1"/>
        <end position="100"/>
    </location>
</feature>
<feature type="propeptide" id="PRO_0000037990" description="ER anchor for the capsid protein C, removed in mature form by serine protease NS3" evidence="6">
    <location>
        <begin position="101"/>
        <end position="114"/>
    </location>
</feature>
<feature type="chain" id="PRO_0000308293" description="Protein prM" evidence="6">
    <location>
        <begin position="115"/>
        <end position="280"/>
    </location>
</feature>
<feature type="chain" id="PRO_0000308294" description="Peptide pr" evidence="6">
    <location>
        <begin position="115"/>
        <end position="205"/>
    </location>
</feature>
<feature type="chain" id="PRO_0000037991" description="Small envelope protein M" evidence="6">
    <location>
        <begin position="206"/>
        <end position="280"/>
    </location>
</feature>
<feature type="chain" id="PRO_0000037992" description="Envelope protein E" evidence="6">
    <location>
        <begin position="281"/>
        <end position="773"/>
    </location>
</feature>
<feature type="chain" id="PRO_0000037993" description="Non-structural protein 1" evidence="6">
    <location>
        <begin position="774"/>
        <end position="1125"/>
    </location>
</feature>
<feature type="chain" id="PRO_0000037994" description="Non-structural protein 2A" evidence="6">
    <location>
        <begin position="1126"/>
        <end position="1343"/>
    </location>
</feature>
<feature type="chain" id="PRO_0000037995" description="Serine protease subunit NS2B" evidence="6">
    <location>
        <begin position="1344"/>
        <end position="1473"/>
    </location>
</feature>
<feature type="chain" id="PRO_0000037996" description="Serine protease NS3" evidence="6">
    <location>
        <begin position="1474"/>
        <end position="2092"/>
    </location>
</feature>
<feature type="chain" id="PRO_0000037997" description="Non-structural protein 4A" evidence="6">
    <location>
        <begin position="2093"/>
        <end position="2219"/>
    </location>
</feature>
<feature type="peptide" id="PRO_0000308296" description="Peptide 2k" evidence="6">
    <location>
        <begin position="2220"/>
        <end position="2242"/>
    </location>
</feature>
<feature type="chain" id="PRO_0000037998" description="Non-structural protein 4B" evidence="6">
    <location>
        <begin position="2243"/>
        <end position="2490"/>
    </location>
</feature>
<feature type="chain" id="PRO_0000037999" description="RNA-directed RNA polymerase NS5" evidence="6">
    <location>
        <begin position="2491"/>
        <end position="3390"/>
    </location>
</feature>
<feature type="topological domain" description="Cytoplasmic" evidence="11">
    <location>
        <begin position="1"/>
        <end position="100"/>
    </location>
</feature>
<feature type="transmembrane region" description="Helical" evidence="11">
    <location>
        <begin position="101"/>
        <end position="118"/>
    </location>
</feature>
<feature type="topological domain" description="Extracellular" evidence="11">
    <location>
        <begin position="119"/>
        <end position="243"/>
    </location>
</feature>
<feature type="transmembrane region" description="Helical" evidence="11">
    <location>
        <begin position="244"/>
        <end position="264"/>
    </location>
</feature>
<feature type="topological domain" description="Cytoplasmic" evidence="11">
    <location>
        <position position="265"/>
    </location>
</feature>
<feature type="transmembrane region" description="Helical" evidence="11">
    <location>
        <begin position="266"/>
        <end position="280"/>
    </location>
</feature>
<feature type="topological domain" description="Extracellular" evidence="11">
    <location>
        <begin position="281"/>
        <end position="723"/>
    </location>
</feature>
<feature type="transmembrane region" description="Helical" evidence="11">
    <location>
        <begin position="724"/>
        <end position="744"/>
    </location>
</feature>
<feature type="topological domain" description="Cytoplasmic" evidence="11">
    <location>
        <begin position="745"/>
        <end position="750"/>
    </location>
</feature>
<feature type="transmembrane region" description="Helical" evidence="11">
    <location>
        <begin position="751"/>
        <end position="771"/>
    </location>
</feature>
<feature type="topological domain" description="Extracellular" evidence="11">
    <location>
        <begin position="772"/>
        <end position="1193"/>
    </location>
</feature>
<feature type="transmembrane region" description="Helical" evidence="11">
    <location>
        <begin position="1194"/>
        <end position="1218"/>
    </location>
</feature>
<feature type="topological domain" description="Cytoplasmic" evidence="11">
    <location>
        <begin position="1219"/>
        <end position="1224"/>
    </location>
</feature>
<feature type="transmembrane region" description="Helical" evidence="11">
    <location>
        <begin position="1225"/>
        <end position="1243"/>
    </location>
</feature>
<feature type="topological domain" description="Lumenal" evidence="11">
    <location>
        <begin position="1244"/>
        <end position="1267"/>
    </location>
</feature>
<feature type="transmembrane region" description="Helical" evidence="11">
    <location>
        <begin position="1268"/>
        <end position="1288"/>
    </location>
</feature>
<feature type="topological domain" description="Cytoplasmic" evidence="11">
    <location>
        <position position="1289"/>
    </location>
</feature>
<feature type="transmembrane region" description="Helical" evidence="11">
    <location>
        <begin position="1290"/>
        <end position="1308"/>
    </location>
</feature>
<feature type="topological domain" description="Lumenal" evidence="11">
    <location>
        <begin position="1309"/>
        <end position="1315"/>
    </location>
</feature>
<feature type="transmembrane region" description="Helical" evidence="11">
    <location>
        <begin position="1316"/>
        <end position="1336"/>
    </location>
</feature>
<feature type="topological domain" description="Cytoplasmic" evidence="11">
    <location>
        <begin position="1337"/>
        <end position="1344"/>
    </location>
</feature>
<feature type="transmembrane region" description="Helical" evidence="11">
    <location>
        <begin position="1345"/>
        <end position="1365"/>
    </location>
</feature>
<feature type="topological domain" description="Lumenal" evidence="11">
    <location>
        <begin position="1366"/>
        <end position="1368"/>
    </location>
</feature>
<feature type="transmembrane region" description="Helical" evidence="11">
    <location>
        <begin position="1369"/>
        <end position="1389"/>
    </location>
</feature>
<feature type="topological domain" description="Cytoplasmic" evidence="11">
    <location>
        <begin position="1390"/>
        <end position="1443"/>
    </location>
</feature>
<feature type="intramembrane region" description="Helical" evidence="11">
    <location>
        <begin position="1444"/>
        <end position="1464"/>
    </location>
</feature>
<feature type="topological domain" description="Cytoplasmic" evidence="11">
    <location>
        <begin position="1465"/>
        <end position="2146"/>
    </location>
</feature>
<feature type="transmembrane region" description="Helical" evidence="11">
    <location>
        <begin position="2147"/>
        <end position="2167"/>
    </location>
</feature>
<feature type="topological domain" description="Lumenal" evidence="11">
    <location>
        <begin position="2168"/>
        <end position="2169"/>
    </location>
</feature>
<feature type="intramembrane region" description="Helical" evidence="11">
    <location>
        <begin position="2170"/>
        <end position="2190"/>
    </location>
</feature>
<feature type="topological domain" description="Lumenal" evidence="11">
    <location>
        <position position="2191"/>
    </location>
</feature>
<feature type="transmembrane region" description="Helical" evidence="11">
    <location>
        <begin position="2192"/>
        <end position="2212"/>
    </location>
</feature>
<feature type="topological domain" description="Cytoplasmic" evidence="11">
    <location>
        <begin position="2213"/>
        <end position="2227"/>
    </location>
</feature>
<feature type="transmembrane region" description="Helical; Note=Signal for NS4B" evidence="12">
    <location>
        <begin position="2228"/>
        <end position="2248"/>
    </location>
</feature>
<feature type="topological domain" description="Lumenal" evidence="11">
    <location>
        <begin position="2249"/>
        <end position="2273"/>
    </location>
</feature>
<feature type="intramembrane region" description="Helical" evidence="11">
    <location>
        <begin position="2274"/>
        <end position="2294"/>
    </location>
</feature>
<feature type="topological domain" description="Lumenal" evidence="11">
    <location>
        <begin position="2295"/>
        <end position="2305"/>
    </location>
</feature>
<feature type="intramembrane region" description="Helical" evidence="11">
    <location>
        <begin position="2306"/>
        <end position="2326"/>
    </location>
</feature>
<feature type="topological domain" description="Lumenal" evidence="11">
    <location>
        <begin position="2327"/>
        <end position="2346"/>
    </location>
</feature>
<feature type="transmembrane region" description="Helical" evidence="11">
    <location>
        <begin position="2347"/>
        <end position="2367"/>
    </location>
</feature>
<feature type="topological domain" description="Cytoplasmic" evidence="11">
    <location>
        <begin position="2368"/>
        <end position="2412"/>
    </location>
</feature>
<feature type="transmembrane region" description="Helical" evidence="11">
    <location>
        <begin position="2413"/>
        <end position="2433"/>
    </location>
</feature>
<feature type="topological domain" description="Lumenal" evidence="11">
    <location>
        <begin position="2434"/>
        <end position="2458"/>
    </location>
</feature>
<feature type="transmembrane region" description="Helical" evidence="11">
    <location>
        <begin position="2459"/>
        <end position="2479"/>
    </location>
</feature>
<feature type="topological domain" description="Cytoplasmic" evidence="11">
    <location>
        <begin position="2480"/>
        <end position="3390"/>
    </location>
</feature>
<feature type="domain" description="Peptidase S7" evidence="17">
    <location>
        <begin position="1474"/>
        <end position="1651"/>
    </location>
</feature>
<feature type="domain" description="Helicase ATP-binding" evidence="14">
    <location>
        <begin position="1654"/>
        <end position="1810"/>
    </location>
</feature>
<feature type="domain" description="Helicase C-terminal" evidence="15">
    <location>
        <begin position="1821"/>
        <end position="1986"/>
    </location>
</feature>
<feature type="domain" description="mRNA cap 0-1 NS5-type MT" evidence="18">
    <location>
        <begin position="2492"/>
        <end position="2753"/>
    </location>
</feature>
<feature type="domain" description="RdRp catalytic" evidence="13">
    <location>
        <begin position="3018"/>
        <end position="3168"/>
    </location>
</feature>
<feature type="region of interest" description="Interaction with host EXOC1" evidence="5">
    <location>
        <begin position="1"/>
        <end position="15"/>
    </location>
</feature>
<feature type="region of interest" description="Hydrophobic; homodimerization of capsid protein C" evidence="6">
    <location>
        <begin position="37"/>
        <end position="72"/>
    </location>
</feature>
<feature type="region of interest" description="Fusion peptide" evidence="3">
    <location>
        <begin position="378"/>
        <end position="391"/>
    </location>
</feature>
<feature type="region of interest" description="Interacts with and activates NS3 protease" evidence="16">
    <location>
        <begin position="1396"/>
        <end position="1435"/>
    </location>
</feature>
<feature type="region of interest" description="Important for RNA-binding" evidence="4">
    <location>
        <begin position="1658"/>
        <end position="1661"/>
    </location>
</feature>
<feature type="short sequence motif" description="DEAH box" evidence="14">
    <location>
        <begin position="1758"/>
        <end position="1761"/>
    </location>
</feature>
<feature type="short sequence motif" description="SUMO-interacting motif" evidence="6">
    <location>
        <begin position="2567"/>
        <end position="2570"/>
    </location>
</feature>
<feature type="active site" description="Charge relay system; for serine protease NS3 activity" evidence="17">
    <location>
        <position position="1524"/>
    </location>
</feature>
<feature type="active site" description="Charge relay system; for serine protease NS3 activity" evidence="17">
    <location>
        <position position="1548"/>
    </location>
</feature>
<feature type="active site" description="Charge relay system; for serine protease NS3 activity" evidence="17">
    <location>
        <position position="1608"/>
    </location>
</feature>
<feature type="active site" description="For 2'-O-MTase activity" evidence="9">
    <location>
        <position position="2551"/>
    </location>
</feature>
<feature type="active site" description="For 2'-O-MTase activity" evidence="9">
    <location>
        <position position="2636"/>
    </location>
</feature>
<feature type="active site" description="For 2'-O-MTase activity" evidence="9">
    <location>
        <position position="2670"/>
    </location>
</feature>
<feature type="active site" description="For 2'-O-MTase activity" evidence="9">
    <location>
        <position position="2706"/>
    </location>
</feature>
<feature type="binding site" evidence="14">
    <location>
        <begin position="1667"/>
        <end position="1674"/>
    </location>
    <ligand>
        <name>ATP</name>
        <dbReference type="ChEBI" id="CHEBI:30616"/>
    </ligand>
</feature>
<feature type="binding site" evidence="18">
    <location>
        <position position="2546"/>
    </location>
    <ligand>
        <name>S-adenosyl-L-methionine</name>
        <dbReference type="ChEBI" id="CHEBI:59789"/>
    </ligand>
</feature>
<feature type="binding site" evidence="18">
    <location>
        <position position="2576"/>
    </location>
    <ligand>
        <name>S-adenosyl-L-methionine</name>
        <dbReference type="ChEBI" id="CHEBI:59789"/>
    </ligand>
</feature>
<feature type="binding site" evidence="18">
    <location>
        <position position="2577"/>
    </location>
    <ligand>
        <name>S-adenosyl-L-methionine</name>
        <dbReference type="ChEBI" id="CHEBI:59789"/>
    </ligand>
</feature>
<feature type="binding site" evidence="18">
    <location>
        <position position="2594"/>
    </location>
    <ligand>
        <name>S-adenosyl-L-methionine</name>
        <dbReference type="ChEBI" id="CHEBI:59789"/>
    </ligand>
</feature>
<feature type="binding site" evidence="18">
    <location>
        <position position="2595"/>
    </location>
    <ligand>
        <name>S-adenosyl-L-methionine</name>
        <dbReference type="ChEBI" id="CHEBI:59789"/>
    </ligand>
</feature>
<feature type="binding site" evidence="18">
    <location>
        <position position="2621"/>
    </location>
    <ligand>
        <name>S-adenosyl-L-methionine</name>
        <dbReference type="ChEBI" id="CHEBI:59789"/>
    </ligand>
</feature>
<feature type="binding site" evidence="18">
    <location>
        <position position="2622"/>
    </location>
    <ligand>
        <name>S-adenosyl-L-methionine</name>
        <dbReference type="ChEBI" id="CHEBI:59789"/>
    </ligand>
</feature>
<feature type="binding site" evidence="18">
    <location>
        <position position="2637"/>
    </location>
    <ligand>
        <name>S-adenosyl-L-methionine</name>
        <dbReference type="ChEBI" id="CHEBI:59789"/>
    </ligand>
</feature>
<feature type="binding site" evidence="18">
    <location>
        <position position="2708"/>
    </location>
    <ligand>
        <name>S-adenosyl-L-methionine</name>
        <dbReference type="ChEBI" id="CHEBI:59789"/>
    </ligand>
</feature>
<feature type="binding site" evidence="21">
    <location>
        <position position="2927"/>
    </location>
    <ligand>
        <name>Zn(2+)</name>
        <dbReference type="ChEBI" id="CHEBI:29105"/>
        <label>1</label>
    </ligand>
</feature>
<feature type="binding site" evidence="21">
    <location>
        <position position="2931"/>
    </location>
    <ligand>
        <name>Zn(2+)</name>
        <dbReference type="ChEBI" id="CHEBI:29105"/>
        <label>1</label>
    </ligand>
</feature>
<feature type="binding site" evidence="21">
    <location>
        <position position="2936"/>
    </location>
    <ligand>
        <name>Zn(2+)</name>
        <dbReference type="ChEBI" id="CHEBI:29105"/>
        <label>1</label>
    </ligand>
</feature>
<feature type="binding site" evidence="21">
    <location>
        <position position="2939"/>
    </location>
    <ligand>
        <name>Zn(2+)</name>
        <dbReference type="ChEBI" id="CHEBI:29105"/>
        <label>1</label>
    </ligand>
</feature>
<feature type="binding site" evidence="21">
    <location>
        <position position="3202"/>
    </location>
    <ligand>
        <name>Zn(2+)</name>
        <dbReference type="ChEBI" id="CHEBI:29105"/>
        <label>2</label>
    </ligand>
</feature>
<feature type="binding site" evidence="21">
    <location>
        <position position="3218"/>
    </location>
    <ligand>
        <name>Zn(2+)</name>
        <dbReference type="ChEBI" id="CHEBI:29105"/>
        <label>2</label>
    </ligand>
</feature>
<feature type="binding site" evidence="9">
    <location>
        <position position="3337"/>
    </location>
    <ligand>
        <name>Zn(2+)</name>
        <dbReference type="ChEBI" id="CHEBI:29105"/>
        <label>2</label>
    </ligand>
</feature>
<feature type="site" description="Cleavage; by viral protease NS3" evidence="6">
    <location>
        <begin position="100"/>
        <end position="101"/>
    </location>
</feature>
<feature type="site" description="Cleavage; by host signal peptidase" evidence="6">
    <location>
        <begin position="114"/>
        <end position="115"/>
    </location>
</feature>
<feature type="site" description="Cleavage; by host furin" evidence="6 11">
    <location>
        <begin position="205"/>
        <end position="206"/>
    </location>
</feature>
<feature type="site" description="Cleavage; by host signal peptidase" evidence="6">
    <location>
        <begin position="280"/>
        <end position="281"/>
    </location>
</feature>
<feature type="site" description="Cleavage; by host signal peptidase" evidence="6">
    <location>
        <begin position="773"/>
        <end position="774"/>
    </location>
</feature>
<feature type="site" description="Cleavage; by host" evidence="6">
    <location>
        <begin position="1125"/>
        <end position="1126"/>
    </location>
</feature>
<feature type="site" description="Cleavage; by viral protease NS3" evidence="6">
    <location>
        <begin position="1343"/>
        <end position="1344"/>
    </location>
</feature>
<feature type="site" description="Cleavage; by autolysis" evidence="6">
    <location>
        <begin position="1473"/>
        <end position="1474"/>
    </location>
</feature>
<feature type="site" description="Involved in NS3 ATPase and RTPase activities" evidence="2">
    <location>
        <position position="1931"/>
    </location>
</feature>
<feature type="site" description="Involved in NS3 ATPase and RTPase activities" evidence="2">
    <location>
        <position position="1934"/>
    </location>
</feature>
<feature type="site" description="Cleavage; by autolysis" evidence="6">
    <location>
        <begin position="2092"/>
        <end position="2093"/>
    </location>
</feature>
<feature type="site" description="Cleavage; by viral protease NS3" evidence="6">
    <location>
        <begin position="2219"/>
        <end position="2220"/>
    </location>
</feature>
<feature type="site" description="Cleavage; by host signal peptidase" evidence="6">
    <location>
        <begin position="2242"/>
        <end position="2243"/>
    </location>
</feature>
<feature type="site" description="Cleavage; by viral protease NS3" evidence="6">
    <location>
        <begin position="2490"/>
        <end position="2491"/>
    </location>
</feature>
<feature type="site" description="mRNA cap binding" evidence="18">
    <location>
        <position position="2504"/>
    </location>
</feature>
<feature type="site" description="mRNA cap binding; via carbonyl oxygen" evidence="18">
    <location>
        <position position="2507"/>
    </location>
</feature>
<feature type="site" description="mRNA cap binding" evidence="18">
    <location>
        <position position="2508"/>
    </location>
</feature>
<feature type="site" description="mRNA cap binding; via carbonyl oxygen" evidence="18">
    <location>
        <position position="2510"/>
    </location>
</feature>
<feature type="site" description="mRNA cap binding" evidence="18">
    <location>
        <position position="2515"/>
    </location>
</feature>
<feature type="site" description="mRNA cap binding" evidence="18">
    <location>
        <position position="2519"/>
    </location>
</feature>
<feature type="site" description="Essential for 2'-O-methyltransferase activity" evidence="18">
    <location>
        <position position="2551"/>
    </location>
</feature>
<feature type="site" description="Essential for 2'-O-methyltransferase and N-7 methyltransferase activity" evidence="18">
    <location>
        <position position="2636"/>
    </location>
</feature>
<feature type="site" description="mRNA cap binding" evidence="18">
    <location>
        <position position="2640"/>
    </location>
</feature>
<feature type="site" description="Essential for 2'-O-methyltransferase activity" evidence="18">
    <location>
        <position position="2670"/>
    </location>
</feature>
<feature type="site" description="mRNA cap binding" evidence="18">
    <location>
        <position position="2701"/>
    </location>
</feature>
<feature type="site" description="mRNA cap binding" evidence="18">
    <location>
        <position position="2703"/>
    </location>
</feature>
<feature type="site" description="Essential for 2'-O-methyltransferase activity" evidence="18">
    <location>
        <position position="2706"/>
    </location>
</feature>
<feature type="modified residue" description="N6-acetyllysine; by host" evidence="8">
    <location>
        <position position="1862"/>
    </location>
</feature>
<feature type="modified residue" description="Phosphoserine" evidence="1">
    <location>
        <position position="2546"/>
    </location>
</feature>
<feature type="glycosylation site" description="N-linked (GlcNAc...) asparagine; by host" evidence="11">
    <location>
        <position position="183"/>
    </location>
</feature>
<feature type="glycosylation site" description="N-linked (GlcNAc...) asparagine; by host" evidence="11 19">
    <location>
        <position position="347"/>
    </location>
</feature>
<feature type="glycosylation site" description="N-linked (GlcNAc...) asparagine; by host" evidence="11 19">
    <location>
        <position position="433"/>
    </location>
</feature>
<feature type="glycosylation site" description="N-linked (GlcNAc...) asparagine; by host" evidence="12">
    <location>
        <position position="903"/>
    </location>
</feature>
<feature type="glycosylation site" description="N-linked (GlcNAc...) asparagine; by host" evidence="12">
    <location>
        <position position="980"/>
    </location>
</feature>
<feature type="glycosylation site" description="N-linked (GlcNAc...) asparagine; by host" evidence="12">
    <location>
        <position position="1132"/>
    </location>
</feature>
<feature type="glycosylation site" description="N-linked (GlcNAc...) asparagine; by host" evidence="12">
    <location>
        <position position="1188"/>
    </location>
</feature>
<feature type="glycosylation site" description="N-linked (GlcNAc...) asparagine; by host" evidence="12">
    <location>
        <position position="2300"/>
    </location>
</feature>
<feature type="glycosylation site" description="N-linked (GlcNAc...) asparagine; by host" evidence="12">
    <location>
        <position position="2304"/>
    </location>
</feature>
<feature type="glycosylation site" description="N-linked (GlcNAc...) asparagine; by host" evidence="12">
    <location>
        <position position="2456"/>
    </location>
</feature>
<feature type="disulfide bond" evidence="5">
    <location>
        <begin position="283"/>
        <end position="310"/>
    </location>
</feature>
<feature type="disulfide bond" evidence="5">
    <location>
        <begin position="340"/>
        <end position="401"/>
    </location>
</feature>
<feature type="disulfide bond" evidence="5">
    <location>
        <begin position="354"/>
        <end position="385"/>
    </location>
</feature>
<feature type="disulfide bond" evidence="5">
    <location>
        <begin position="372"/>
        <end position="396"/>
    </location>
</feature>
<feature type="disulfide bond" evidence="5">
    <location>
        <begin position="463"/>
        <end position="563"/>
    </location>
</feature>
<feature type="disulfide bond" evidence="5">
    <location>
        <begin position="580"/>
        <end position="611"/>
    </location>
</feature>
<feature type="disulfide bond" evidence="5">
    <location>
        <begin position="777"/>
        <end position="788"/>
    </location>
</feature>
<feature type="disulfide bond" evidence="5">
    <location>
        <begin position="828"/>
        <end position="916"/>
    </location>
</feature>
<feature type="disulfide bond" evidence="5">
    <location>
        <begin position="952"/>
        <end position="996"/>
    </location>
</feature>
<feature type="disulfide bond" evidence="5">
    <location>
        <begin position="1053"/>
        <end position="1102"/>
    </location>
</feature>
<feature type="disulfide bond" evidence="5">
    <location>
        <begin position="1064"/>
        <end position="1086"/>
    </location>
</feature>
<feature type="disulfide bond" evidence="5">
    <location>
        <begin position="1085"/>
        <end position="1089"/>
    </location>
</feature>
<feature type="mutagenesis site" description="No effect on N7 methylase activity; 35% loss of 2'-O methylase activity." evidence="20">
    <original>F</original>
    <variation>A</variation>
    <location>
        <position position="2623"/>
    </location>
</feature>
<feature type="mutagenesis site" description="70% loss of N7 methylase activity; 60% loss of 2'-O methylase activity." evidence="20">
    <original>G</original>
    <variation>A</variation>
    <location>
        <position position="2638"/>
    </location>
</feature>
<feature type="mutagenesis site" description="40% loss of N7 methylase activity; No effect on loss of 2'-O methylase activity." evidence="20">
    <original>R</original>
    <variation>A</variation>
    <location>
        <position position="2650"/>
    </location>
</feature>
<feature type="mutagenesis site" description="40% loss of N7 methylase activity; No effect on loss of 2'-O methylase activity." evidence="20">
    <original>R</original>
    <variation>A</variation>
    <location>
        <position position="2653"/>
    </location>
</feature>
<feature type="mutagenesis site" description="No effect on N7 methylase activity; 80% loss of 2'-O methylase activity." evidence="20">
    <original>L</original>
    <variation>A</variation>
    <location>
        <position position="2672"/>
    </location>
</feature>
<feature type="turn" evidence="25">
    <location>
        <begin position="282"/>
        <end position="285"/>
    </location>
</feature>
<feature type="strand" evidence="29">
    <location>
        <begin position="287"/>
        <end position="293"/>
    </location>
</feature>
<feature type="helix" evidence="29">
    <location>
        <begin position="295"/>
        <end position="297"/>
    </location>
</feature>
<feature type="strand" evidence="29">
    <location>
        <begin position="299"/>
        <end position="314"/>
    </location>
</feature>
<feature type="strand" evidence="29">
    <location>
        <begin position="321"/>
        <end position="330"/>
    </location>
</feature>
<feature type="strand" evidence="29">
    <location>
        <begin position="334"/>
        <end position="352"/>
    </location>
</feature>
<feature type="helix" evidence="29">
    <location>
        <begin position="363"/>
        <end position="365"/>
    </location>
</feature>
<feature type="strand" evidence="29">
    <location>
        <begin position="367"/>
        <end position="380"/>
    </location>
</feature>
<feature type="turn" evidence="29">
    <location>
        <begin position="381"/>
        <end position="384"/>
    </location>
</feature>
<feature type="strand" evidence="29">
    <location>
        <begin position="389"/>
        <end position="409"/>
    </location>
</feature>
<feature type="helix" evidence="29">
    <location>
        <begin position="412"/>
        <end position="414"/>
    </location>
</feature>
<feature type="strand" evidence="29">
    <location>
        <begin position="415"/>
        <end position="423"/>
    </location>
</feature>
<feature type="strand" evidence="25">
    <location>
        <begin position="434"/>
        <end position="436"/>
    </location>
</feature>
<feature type="strand" evidence="29">
    <location>
        <begin position="438"/>
        <end position="446"/>
    </location>
</feature>
<feature type="strand" evidence="29">
    <location>
        <begin position="448"/>
        <end position="453"/>
    </location>
</feature>
<feature type="turn" evidence="29">
    <location>
        <begin position="454"/>
        <end position="456"/>
    </location>
</feature>
<feature type="strand" evidence="29">
    <location>
        <begin position="457"/>
        <end position="464"/>
    </location>
</feature>
<feature type="strand" evidence="29">
    <location>
        <begin position="474"/>
        <end position="479"/>
    </location>
</feature>
<feature type="strand" evidence="29">
    <location>
        <begin position="482"/>
        <end position="487"/>
    </location>
</feature>
<feature type="helix" evidence="29">
    <location>
        <begin position="488"/>
        <end position="492"/>
    </location>
</feature>
<feature type="strand" evidence="28">
    <location>
        <begin position="498"/>
        <end position="502"/>
    </location>
</feature>
<feature type="strand" evidence="25">
    <location>
        <begin position="503"/>
        <end position="505"/>
    </location>
</feature>
<feature type="helix" evidence="29">
    <location>
        <begin position="512"/>
        <end position="515"/>
    </location>
</feature>
<feature type="strand" evidence="29">
    <location>
        <begin position="516"/>
        <end position="519"/>
    </location>
</feature>
<feature type="strand" evidence="29">
    <location>
        <begin position="521"/>
        <end position="524"/>
    </location>
</feature>
<feature type="strand" evidence="29">
    <location>
        <begin position="527"/>
        <end position="530"/>
    </location>
</feature>
<feature type="helix" evidence="29">
    <location>
        <begin position="535"/>
        <end position="541"/>
    </location>
</feature>
<feature type="strand" evidence="29">
    <location>
        <begin position="543"/>
        <end position="553"/>
    </location>
</feature>
<feature type="strand" evidence="29">
    <location>
        <begin position="555"/>
        <end position="557"/>
    </location>
</feature>
<feature type="strand" evidence="29">
    <location>
        <begin position="560"/>
        <end position="570"/>
    </location>
</feature>
<feature type="turn" evidence="28">
    <location>
        <begin position="573"/>
        <end position="576"/>
    </location>
</feature>
<feature type="strand" evidence="25">
    <location>
        <begin position="577"/>
        <end position="579"/>
    </location>
</feature>
<feature type="strand" evidence="26">
    <location>
        <begin position="584"/>
        <end position="586"/>
    </location>
</feature>
<feature type="strand" evidence="25">
    <location>
        <begin position="594"/>
        <end position="596"/>
    </location>
</feature>
<feature type="strand" evidence="26">
    <location>
        <begin position="598"/>
        <end position="604"/>
    </location>
</feature>
<feature type="strand" evidence="26">
    <location>
        <begin position="610"/>
        <end position="612"/>
    </location>
</feature>
<feature type="strand" evidence="26">
    <location>
        <begin position="615"/>
        <end position="618"/>
    </location>
</feature>
<feature type="strand" evidence="26">
    <location>
        <begin position="628"/>
        <end position="631"/>
    </location>
</feature>
<feature type="strand" evidence="26">
    <location>
        <begin position="635"/>
        <end position="637"/>
    </location>
</feature>
<feature type="strand" evidence="29">
    <location>
        <begin position="639"/>
        <end position="641"/>
    </location>
</feature>
<feature type="strand" evidence="26">
    <location>
        <begin position="643"/>
        <end position="648"/>
    </location>
</feature>
<feature type="strand" evidence="26">
    <location>
        <begin position="651"/>
        <end position="661"/>
    </location>
</feature>
<feature type="strand" evidence="26">
    <location>
        <begin position="665"/>
        <end position="671"/>
    </location>
</feature>
<feature type="helix" evidence="27">
    <location>
        <begin position="2499"/>
        <end position="2509"/>
    </location>
</feature>
<feature type="helix" evidence="27">
    <location>
        <begin position="2512"/>
        <end position="2518"/>
    </location>
</feature>
<feature type="turn" evidence="27">
    <location>
        <begin position="2519"/>
        <end position="2522"/>
    </location>
</feature>
<feature type="strand" evidence="27">
    <location>
        <begin position="2524"/>
        <end position="2527"/>
    </location>
</feature>
<feature type="helix" evidence="27">
    <location>
        <begin position="2529"/>
        <end position="2536"/>
    </location>
</feature>
<feature type="helix" evidence="27">
    <location>
        <begin position="2548"/>
        <end position="2557"/>
    </location>
</feature>
<feature type="strand" evidence="27">
    <location>
        <begin position="2565"/>
        <end position="2570"/>
    </location>
</feature>
<feature type="helix" evidence="27">
    <location>
        <begin position="2576"/>
        <end position="2581"/>
    </location>
</feature>
<feature type="strand" evidence="27">
    <location>
        <begin position="2587"/>
        <end position="2593"/>
    </location>
</feature>
<feature type="helix" evidence="27">
    <location>
        <begin position="2611"/>
        <end position="2613"/>
    </location>
</feature>
<feature type="strand" evidence="27">
    <location>
        <begin position="2614"/>
        <end position="2617"/>
    </location>
</feature>
<feature type="helix" evidence="27">
    <location>
        <begin position="2622"/>
        <end position="2624"/>
    </location>
</feature>
<feature type="strand" evidence="27">
    <location>
        <begin position="2631"/>
        <end position="2635"/>
    </location>
</feature>
<feature type="helix" evidence="27">
    <location>
        <begin position="2644"/>
        <end position="2658"/>
    </location>
</feature>
<feature type="helix" evidence="27">
    <location>
        <begin position="2659"/>
        <end position="2661"/>
    </location>
</feature>
<feature type="strand" evidence="27">
    <location>
        <begin position="2666"/>
        <end position="2672"/>
    </location>
</feature>
<feature type="helix" evidence="27">
    <location>
        <begin position="2677"/>
        <end position="2690"/>
    </location>
</feature>
<feature type="strand" evidence="27">
    <location>
        <begin position="2693"/>
        <end position="2695"/>
    </location>
</feature>
<feature type="strand" evidence="27">
    <location>
        <begin position="2707"/>
        <end position="2712"/>
    </location>
</feature>
<feature type="helix" evidence="27">
    <location>
        <begin position="2717"/>
        <end position="2730"/>
    </location>
</feature>
<feature type="turn" evidence="27">
    <location>
        <begin position="2731"/>
        <end position="2733"/>
    </location>
</feature>
<feature type="strand" evidence="27">
    <location>
        <begin position="2740"/>
        <end position="2743"/>
    </location>
</feature>
<dbReference type="EC" id="3.4.21.91"/>
<dbReference type="EC" id="3.6.1.15" evidence="10"/>
<dbReference type="EC" id="3.6.4.13" evidence="10"/>
<dbReference type="EC" id="2.1.1.56" evidence="18 20"/>
<dbReference type="EC" id="2.1.1.57" evidence="18 20"/>
<dbReference type="EC" id="2.7.7.48" evidence="13 21"/>
<dbReference type="EMBL" id="M93130">
    <property type="protein sequence ID" value="AAA99437.1"/>
    <property type="molecule type" value="Genomic_RNA"/>
</dbReference>
<dbReference type="PIR" id="A34774">
    <property type="entry name" value="GNWVD3"/>
</dbReference>
<dbReference type="PDB" id="1UZG">
    <property type="method" value="X-ray"/>
    <property type="resolution" value="3.60 A"/>
    <property type="chains" value="A/B=281-672"/>
</dbReference>
<dbReference type="PDB" id="2J7U">
    <property type="method" value="X-ray"/>
    <property type="resolution" value="1.85 A"/>
    <property type="chains" value="A=2762-3390"/>
</dbReference>
<dbReference type="PDB" id="2J7W">
    <property type="method" value="X-ray"/>
    <property type="resolution" value="2.60 A"/>
    <property type="chains" value="A=2762-3390"/>
</dbReference>
<dbReference type="PDB" id="3P8Z">
    <property type="method" value="X-ray"/>
    <property type="resolution" value="1.70 A"/>
    <property type="chains" value="A/C=2491-2752"/>
</dbReference>
<dbReference type="PDB" id="3P97">
    <property type="method" value="X-ray"/>
    <property type="resolution" value="1.70 A"/>
    <property type="chains" value="A/C=2491-2752"/>
</dbReference>
<dbReference type="PDB" id="3UZE">
    <property type="method" value="X-ray"/>
    <property type="resolution" value="2.04 A"/>
    <property type="chains" value="C/D=573-673"/>
</dbReference>
<dbReference type="PDB" id="3VTT">
    <property type="method" value="X-ray"/>
    <property type="resolution" value="1.70 A"/>
    <property type="chains" value="A/B=574-678"/>
</dbReference>
<dbReference type="PDB" id="5CCV">
    <property type="method" value="X-ray"/>
    <property type="resolution" value="3.60 A"/>
    <property type="chains" value="A/B/C/D/E/F/G/H=2491-3390"/>
</dbReference>
<dbReference type="PDB" id="5E9Q">
    <property type="method" value="X-ray"/>
    <property type="resolution" value="1.79 A"/>
    <property type="chains" value="A/C=2497-2752"/>
</dbReference>
<dbReference type="PDB" id="5EC8">
    <property type="method" value="X-ray"/>
    <property type="resolution" value="1.71 A"/>
    <property type="chains" value="A/C=2491-2766"/>
</dbReference>
<dbReference type="PDB" id="5EHG">
    <property type="method" value="X-ray"/>
    <property type="resolution" value="2.02 A"/>
    <property type="chains" value="A/C=2491-2766"/>
</dbReference>
<dbReference type="PDB" id="5EHI">
    <property type="method" value="X-ray"/>
    <property type="resolution" value="1.30 A"/>
    <property type="chains" value="A/C=2491-2746"/>
</dbReference>
<dbReference type="PDB" id="5EIF">
    <property type="method" value="X-ray"/>
    <property type="resolution" value="1.50 A"/>
    <property type="chains" value="A/C=2491-2766"/>
</dbReference>
<dbReference type="PDB" id="5EIW">
    <property type="method" value="X-ray"/>
    <property type="resolution" value="1.61 A"/>
    <property type="chains" value="A/C=2491-2766"/>
</dbReference>
<dbReference type="PDB" id="5EKX">
    <property type="method" value="X-ray"/>
    <property type="resolution" value="1.76 A"/>
    <property type="chains" value="A/B=2491-2766"/>
</dbReference>
<dbReference type="PDB" id="7A3S">
    <property type="method" value="X-ray"/>
    <property type="resolution" value="2.80 A"/>
    <property type="chains" value="A/B/C=281-673"/>
</dbReference>
<dbReference type="PDB" id="7A3T">
    <property type="method" value="X-ray"/>
    <property type="resolution" value="2.65 A"/>
    <property type="chains" value="A=281-673"/>
</dbReference>
<dbReference type="PDBsum" id="1UZG"/>
<dbReference type="PDBsum" id="2J7U"/>
<dbReference type="PDBsum" id="2J7W"/>
<dbReference type="PDBsum" id="3P8Z"/>
<dbReference type="PDBsum" id="3P97"/>
<dbReference type="PDBsum" id="3UZE"/>
<dbReference type="PDBsum" id="3VTT"/>
<dbReference type="PDBsum" id="5CCV"/>
<dbReference type="PDBsum" id="5E9Q"/>
<dbReference type="PDBsum" id="5EC8"/>
<dbReference type="PDBsum" id="5EHG"/>
<dbReference type="PDBsum" id="5EHI"/>
<dbReference type="PDBsum" id="5EIF"/>
<dbReference type="PDBsum" id="5EIW"/>
<dbReference type="PDBsum" id="5EKX"/>
<dbReference type="PDBsum" id="7A3S"/>
<dbReference type="PDBsum" id="7A3T"/>
<dbReference type="SMR" id="P27915"/>
<dbReference type="BindingDB" id="P27915"/>
<dbReference type="DrugBank" id="DB04473">
    <property type="generic name" value="alpha-L-fucose"/>
</dbReference>
<dbReference type="MEROPS" id="S07.001"/>
<dbReference type="iPTMnet" id="P27915"/>
<dbReference type="ABCD" id="P27915">
    <property type="antibodies" value="3 sequenced antibodies"/>
</dbReference>
<dbReference type="EvolutionaryTrace" id="P27915"/>
<dbReference type="PRO" id="PR:P27915"/>
<dbReference type="Proteomes" id="UP000007200">
    <property type="component" value="Segment"/>
</dbReference>
<dbReference type="GO" id="GO:0005576">
    <property type="term" value="C:extracellular region"/>
    <property type="evidence" value="ECO:0007669"/>
    <property type="project" value="UniProtKB-SubCell"/>
</dbReference>
<dbReference type="GO" id="GO:0044167">
    <property type="term" value="C:host cell endoplasmic reticulum membrane"/>
    <property type="evidence" value="ECO:0007669"/>
    <property type="project" value="UniProtKB-SubCell"/>
</dbReference>
<dbReference type="GO" id="GO:0033650">
    <property type="term" value="C:host cell mitochondrion"/>
    <property type="evidence" value="ECO:0007669"/>
    <property type="project" value="UniProtKB-SubCell"/>
</dbReference>
<dbReference type="GO" id="GO:0042025">
    <property type="term" value="C:host cell nucleus"/>
    <property type="evidence" value="ECO:0007669"/>
    <property type="project" value="UniProtKB-SubCell"/>
</dbReference>
<dbReference type="GO" id="GO:0044220">
    <property type="term" value="C:host cell perinuclear region of cytoplasm"/>
    <property type="evidence" value="ECO:0007669"/>
    <property type="project" value="UniProtKB-SubCell"/>
</dbReference>
<dbReference type="GO" id="GO:0016020">
    <property type="term" value="C:membrane"/>
    <property type="evidence" value="ECO:0007669"/>
    <property type="project" value="UniProtKB-KW"/>
</dbReference>
<dbReference type="GO" id="GO:0019028">
    <property type="term" value="C:viral capsid"/>
    <property type="evidence" value="ECO:0007669"/>
    <property type="project" value="UniProtKB-KW"/>
</dbReference>
<dbReference type="GO" id="GO:0019031">
    <property type="term" value="C:viral envelope"/>
    <property type="evidence" value="ECO:0007669"/>
    <property type="project" value="UniProtKB-KW"/>
</dbReference>
<dbReference type="GO" id="GO:0055036">
    <property type="term" value="C:virion membrane"/>
    <property type="evidence" value="ECO:0007669"/>
    <property type="project" value="UniProtKB-SubCell"/>
</dbReference>
<dbReference type="GO" id="GO:0005524">
    <property type="term" value="F:ATP binding"/>
    <property type="evidence" value="ECO:0007669"/>
    <property type="project" value="UniProtKB-KW"/>
</dbReference>
<dbReference type="GO" id="GO:0016887">
    <property type="term" value="F:ATP hydrolysis activity"/>
    <property type="evidence" value="ECO:0007669"/>
    <property type="project" value="RHEA"/>
</dbReference>
<dbReference type="GO" id="GO:0015267">
    <property type="term" value="F:channel activity"/>
    <property type="evidence" value="ECO:0007669"/>
    <property type="project" value="UniProtKB-KW"/>
</dbReference>
<dbReference type="GO" id="GO:0003725">
    <property type="term" value="F:double-stranded RNA binding"/>
    <property type="evidence" value="ECO:0007669"/>
    <property type="project" value="InterPro"/>
</dbReference>
<dbReference type="GO" id="GO:0046872">
    <property type="term" value="F:metal ion binding"/>
    <property type="evidence" value="ECO:0007669"/>
    <property type="project" value="UniProtKB-KW"/>
</dbReference>
<dbReference type="GO" id="GO:0004483">
    <property type="term" value="F:mRNA (nucleoside-2'-O-)-methyltransferase activity"/>
    <property type="evidence" value="ECO:0007669"/>
    <property type="project" value="UniProtKB-EC"/>
</dbReference>
<dbReference type="GO" id="GO:0004482">
    <property type="term" value="F:mRNA 5'-cap (guanine-N7-)-methyltransferase activity"/>
    <property type="evidence" value="ECO:0007669"/>
    <property type="project" value="UniProtKB-EC"/>
</dbReference>
<dbReference type="GO" id="GO:0046983">
    <property type="term" value="F:protein dimerization activity"/>
    <property type="evidence" value="ECO:0007669"/>
    <property type="project" value="InterPro"/>
</dbReference>
<dbReference type="GO" id="GO:0003724">
    <property type="term" value="F:RNA helicase activity"/>
    <property type="evidence" value="ECO:0007669"/>
    <property type="project" value="UniProtKB-EC"/>
</dbReference>
<dbReference type="GO" id="GO:0003968">
    <property type="term" value="F:RNA-directed RNA polymerase activity"/>
    <property type="evidence" value="ECO:0007669"/>
    <property type="project" value="UniProtKB-KW"/>
</dbReference>
<dbReference type="GO" id="GO:0004252">
    <property type="term" value="F:serine-type endopeptidase activity"/>
    <property type="evidence" value="ECO:0007669"/>
    <property type="project" value="InterPro"/>
</dbReference>
<dbReference type="GO" id="GO:0005198">
    <property type="term" value="F:structural molecule activity"/>
    <property type="evidence" value="ECO:0007669"/>
    <property type="project" value="InterPro"/>
</dbReference>
<dbReference type="GO" id="GO:0075512">
    <property type="term" value="P:clathrin-dependent endocytosis of virus by host cell"/>
    <property type="evidence" value="ECO:0007669"/>
    <property type="project" value="UniProtKB-KW"/>
</dbReference>
<dbReference type="GO" id="GO:0039654">
    <property type="term" value="P:fusion of virus membrane with host endosome membrane"/>
    <property type="evidence" value="ECO:0007669"/>
    <property type="project" value="UniProtKB-KW"/>
</dbReference>
<dbReference type="GO" id="GO:0034220">
    <property type="term" value="P:monoatomic ion transmembrane transport"/>
    <property type="evidence" value="ECO:0007669"/>
    <property type="project" value="UniProtKB-KW"/>
</dbReference>
<dbReference type="GO" id="GO:0006508">
    <property type="term" value="P:proteolysis"/>
    <property type="evidence" value="ECO:0007669"/>
    <property type="project" value="UniProtKB-KW"/>
</dbReference>
<dbReference type="GO" id="GO:0039520">
    <property type="term" value="P:symbiont-mediated activation of host autophagy"/>
    <property type="evidence" value="ECO:0007669"/>
    <property type="project" value="UniProtKB-KW"/>
</dbReference>
<dbReference type="GO" id="GO:0039545">
    <property type="term" value="P:symbiont-mediated suppression of host cytoplasmic pattern recognition receptor signaling pathway via inhibition of MAVS activity"/>
    <property type="evidence" value="ECO:0007669"/>
    <property type="project" value="UniProtKB-KW"/>
</dbReference>
<dbReference type="GO" id="GO:0039574">
    <property type="term" value="P:symbiont-mediated suppression of host JAK-STAT cascade via inhibition of host TYK2 activity"/>
    <property type="evidence" value="ECO:0007669"/>
    <property type="project" value="UniProtKB-KW"/>
</dbReference>
<dbReference type="GO" id="GO:0039564">
    <property type="term" value="P:symbiont-mediated suppression of host JAK-STAT cascade via inhibition of STAT2 activity"/>
    <property type="evidence" value="ECO:0007669"/>
    <property type="project" value="UniProtKB-KW"/>
</dbReference>
<dbReference type="GO" id="GO:0039502">
    <property type="term" value="P:symbiont-mediated suppression of host type I interferon-mediated signaling pathway"/>
    <property type="evidence" value="ECO:0007669"/>
    <property type="project" value="UniProtKB-KW"/>
</dbReference>
<dbReference type="GO" id="GO:0039694">
    <property type="term" value="P:viral RNA genome replication"/>
    <property type="evidence" value="ECO:0007669"/>
    <property type="project" value="InterPro"/>
</dbReference>
<dbReference type="GO" id="GO:0019062">
    <property type="term" value="P:virion attachment to host cell"/>
    <property type="evidence" value="ECO:0007669"/>
    <property type="project" value="UniProtKB-KW"/>
</dbReference>
<dbReference type="CDD" id="cd20761">
    <property type="entry name" value="capping_2-OMTase_Flaviviridae"/>
    <property type="match status" value="1"/>
</dbReference>
<dbReference type="CDD" id="cd17931">
    <property type="entry name" value="DEXHc_viral_Ns3"/>
    <property type="match status" value="1"/>
</dbReference>
<dbReference type="CDD" id="cd12149">
    <property type="entry name" value="Flavi_E_C"/>
    <property type="match status" value="1"/>
</dbReference>
<dbReference type="CDD" id="cd17038">
    <property type="entry name" value="Flavi_M"/>
    <property type="match status" value="1"/>
</dbReference>
<dbReference type="CDD" id="cd23204">
    <property type="entry name" value="Flavivirus_RdRp"/>
    <property type="match status" value="1"/>
</dbReference>
<dbReference type="CDD" id="cd18806">
    <property type="entry name" value="SF2_C_viral"/>
    <property type="match status" value="1"/>
</dbReference>
<dbReference type="FunFam" id="1.20.1280.260:FF:000001">
    <property type="entry name" value="Envelope glycoprotein"/>
    <property type="match status" value="1"/>
</dbReference>
<dbReference type="FunFam" id="2.60.40.350:FF:000001">
    <property type="entry name" value="Envelope glycoprotein"/>
    <property type="match status" value="1"/>
</dbReference>
<dbReference type="FunFam" id="1.10.10.930:FF:000001">
    <property type="entry name" value="Genome polyprotein"/>
    <property type="match status" value="1"/>
</dbReference>
<dbReference type="FunFam" id="2.60.260.50:FF:000001">
    <property type="entry name" value="Genome polyprotein"/>
    <property type="match status" value="1"/>
</dbReference>
<dbReference type="FunFam" id="3.30.70.2840:FF:000001">
    <property type="entry name" value="Genome polyprotein"/>
    <property type="match status" value="1"/>
</dbReference>
<dbReference type="FunFam" id="3.30.70.2840:FF:000002">
    <property type="entry name" value="Genome polyprotein"/>
    <property type="match status" value="1"/>
</dbReference>
<dbReference type="FunFam" id="3.40.50.150:FF:000105">
    <property type="entry name" value="Genome polyprotein"/>
    <property type="match status" value="1"/>
</dbReference>
<dbReference type="FunFam" id="3.40.50.300:FF:000763">
    <property type="entry name" value="Genome polyprotein"/>
    <property type="match status" value="1"/>
</dbReference>
<dbReference type="Gene3D" id="1.10.10.930">
    <property type="match status" value="1"/>
</dbReference>
<dbReference type="Gene3D" id="1.10.260.90">
    <property type="match status" value="1"/>
</dbReference>
<dbReference type="Gene3D" id="1.20.1280.260">
    <property type="match status" value="1"/>
</dbReference>
<dbReference type="Gene3D" id="2.40.10.120">
    <property type="match status" value="2"/>
</dbReference>
<dbReference type="Gene3D" id="2.60.40.350">
    <property type="match status" value="1"/>
</dbReference>
<dbReference type="Gene3D" id="1.10.8.970">
    <property type="entry name" value="Flavivirus envelope glycoprotein M-like"/>
    <property type="match status" value="1"/>
</dbReference>
<dbReference type="Gene3D" id="2.60.260.50">
    <property type="entry name" value="Flavivirus polyprotein propeptide domain"/>
    <property type="match status" value="1"/>
</dbReference>
<dbReference type="Gene3D" id="3.30.70.2840">
    <property type="entry name" value="Flavivirus RNA-directed RNA polymerase, thumb domain"/>
    <property type="match status" value="3"/>
</dbReference>
<dbReference type="Gene3D" id="3.40.50.300">
    <property type="entry name" value="P-loop containing nucleotide triphosphate hydrolases"/>
    <property type="match status" value="2"/>
</dbReference>
<dbReference type="Gene3D" id="2.60.98.10">
    <property type="entry name" value="Tick-borne Encephalitis virus Glycoprotein, domain 1"/>
    <property type="match status" value="1"/>
</dbReference>
<dbReference type="Gene3D" id="2.40.10.10">
    <property type="entry name" value="Trypsin-like serine proteases"/>
    <property type="match status" value="1"/>
</dbReference>
<dbReference type="Gene3D" id="3.40.50.150">
    <property type="entry name" value="Vaccinia Virus protein VP39"/>
    <property type="match status" value="1"/>
</dbReference>
<dbReference type="Gene3D" id="3.30.67.10">
    <property type="entry name" value="Viral Envelope Glycoprotein, domain 2"/>
    <property type="match status" value="1"/>
</dbReference>
<dbReference type="Gene3D" id="3.30.387.10">
    <property type="entry name" value="Viral Envelope Glycoprotein, domain 3"/>
    <property type="match status" value="1"/>
</dbReference>
<dbReference type="InterPro" id="IPR043502">
    <property type="entry name" value="DNA/RNA_pol_sf"/>
</dbReference>
<dbReference type="InterPro" id="IPR000069">
    <property type="entry name" value="Env_glycoprot_M_flavivir"/>
</dbReference>
<dbReference type="InterPro" id="IPR038302">
    <property type="entry name" value="Env_glycoprot_M_sf_flavivir"/>
</dbReference>
<dbReference type="InterPro" id="IPR013755">
    <property type="entry name" value="Flav_gly_cen_dom_subdom1"/>
</dbReference>
<dbReference type="InterPro" id="IPR001122">
    <property type="entry name" value="Flavi_capsidC"/>
</dbReference>
<dbReference type="InterPro" id="IPR037172">
    <property type="entry name" value="Flavi_capsidC_sf"/>
</dbReference>
<dbReference type="InterPro" id="IPR011492">
    <property type="entry name" value="Flavi_DEAD"/>
</dbReference>
<dbReference type="InterPro" id="IPR027287">
    <property type="entry name" value="Flavi_E_Ig-like"/>
</dbReference>
<dbReference type="InterPro" id="IPR026470">
    <property type="entry name" value="Flavi_E_Stem/Anchor_dom"/>
</dbReference>
<dbReference type="InterPro" id="IPR038345">
    <property type="entry name" value="Flavi_E_Stem/Anchor_dom_sf"/>
</dbReference>
<dbReference type="InterPro" id="IPR011998">
    <property type="entry name" value="Flavi_Glycoprot_E_cen/dimer"/>
</dbReference>
<dbReference type="InterPro" id="IPR001157">
    <property type="entry name" value="Flavi_NS1"/>
</dbReference>
<dbReference type="InterPro" id="IPR000752">
    <property type="entry name" value="Flavi_NS2A"/>
</dbReference>
<dbReference type="InterPro" id="IPR000487">
    <property type="entry name" value="Flavi_NS2B"/>
</dbReference>
<dbReference type="InterPro" id="IPR001850">
    <property type="entry name" value="Flavi_NS3_S7"/>
</dbReference>
<dbReference type="InterPro" id="IPR000404">
    <property type="entry name" value="Flavi_NS4A"/>
</dbReference>
<dbReference type="InterPro" id="IPR001528">
    <property type="entry name" value="Flavi_NS4B"/>
</dbReference>
<dbReference type="InterPro" id="IPR046811">
    <property type="entry name" value="Flavi_NS5_thumb"/>
</dbReference>
<dbReference type="InterPro" id="IPR002535">
    <property type="entry name" value="Flavi_propep"/>
</dbReference>
<dbReference type="InterPro" id="IPR038688">
    <property type="entry name" value="Flavi_propep_sf"/>
</dbReference>
<dbReference type="InterPro" id="IPR047530">
    <property type="entry name" value="Flavi_RdRp"/>
</dbReference>
<dbReference type="InterPro" id="IPR000208">
    <property type="entry name" value="Flavi_RdRp_fingers/palm"/>
</dbReference>
<dbReference type="InterPro" id="IPR000336">
    <property type="entry name" value="Flavivir/Alphavir_Ig-like_sf"/>
</dbReference>
<dbReference type="InterPro" id="IPR014412">
    <property type="entry name" value="Gen_Poly_FLV"/>
</dbReference>
<dbReference type="InterPro" id="IPR036253">
    <property type="entry name" value="Glycoprot_cen/dimer_sf"/>
</dbReference>
<dbReference type="InterPro" id="IPR038055">
    <property type="entry name" value="Glycoprot_E_dimer_dom"/>
</dbReference>
<dbReference type="InterPro" id="IPR013756">
    <property type="entry name" value="GlyE_cen_dom_subdom2"/>
</dbReference>
<dbReference type="InterPro" id="IPR014001">
    <property type="entry name" value="Helicase_ATP-bd"/>
</dbReference>
<dbReference type="InterPro" id="IPR001650">
    <property type="entry name" value="Helicase_C-like"/>
</dbReference>
<dbReference type="InterPro" id="IPR014756">
    <property type="entry name" value="Ig_E-set"/>
</dbReference>
<dbReference type="InterPro" id="IPR026490">
    <property type="entry name" value="mRNA_cap_0/1_MeTrfase"/>
</dbReference>
<dbReference type="InterPro" id="IPR049486">
    <property type="entry name" value="NS3-hel_C_flaviviridae"/>
</dbReference>
<dbReference type="InterPro" id="IPR027417">
    <property type="entry name" value="P-loop_NTPase"/>
</dbReference>
<dbReference type="InterPro" id="IPR009003">
    <property type="entry name" value="Peptidase_S1_PA"/>
</dbReference>
<dbReference type="InterPro" id="IPR043504">
    <property type="entry name" value="Peptidase_S1_PA_chymotrypsin"/>
</dbReference>
<dbReference type="InterPro" id="IPR007094">
    <property type="entry name" value="RNA-dir_pol_PSvirus"/>
</dbReference>
<dbReference type="InterPro" id="IPR002877">
    <property type="entry name" value="RNA_MeTrfase_FtsJ_dom"/>
</dbReference>
<dbReference type="InterPro" id="IPR029063">
    <property type="entry name" value="SAM-dependent_MTases_sf"/>
</dbReference>
<dbReference type="NCBIfam" id="TIGR04240">
    <property type="entry name" value="flavi_E_stem"/>
    <property type="match status" value="1"/>
</dbReference>
<dbReference type="Pfam" id="PF20907">
    <property type="entry name" value="Flav_NS3-hel_C"/>
    <property type="match status" value="1"/>
</dbReference>
<dbReference type="Pfam" id="PF01003">
    <property type="entry name" value="Flavi_capsid"/>
    <property type="match status" value="1"/>
</dbReference>
<dbReference type="Pfam" id="PF07652">
    <property type="entry name" value="Flavi_DEAD"/>
    <property type="match status" value="1"/>
</dbReference>
<dbReference type="Pfam" id="PF21659">
    <property type="entry name" value="Flavi_E_stem"/>
    <property type="match status" value="1"/>
</dbReference>
<dbReference type="Pfam" id="PF02832">
    <property type="entry name" value="Flavi_glycop_C"/>
    <property type="match status" value="1"/>
</dbReference>
<dbReference type="Pfam" id="PF00869">
    <property type="entry name" value="Flavi_glycoprot"/>
    <property type="match status" value="1"/>
</dbReference>
<dbReference type="Pfam" id="PF01004">
    <property type="entry name" value="Flavi_M"/>
    <property type="match status" value="1"/>
</dbReference>
<dbReference type="Pfam" id="PF00948">
    <property type="entry name" value="Flavi_NS1"/>
    <property type="match status" value="1"/>
</dbReference>
<dbReference type="Pfam" id="PF01005">
    <property type="entry name" value="Flavi_NS2A"/>
    <property type="match status" value="1"/>
</dbReference>
<dbReference type="Pfam" id="PF01002">
    <property type="entry name" value="Flavi_NS2B"/>
    <property type="match status" value="1"/>
</dbReference>
<dbReference type="Pfam" id="PF01350">
    <property type="entry name" value="Flavi_NS4A"/>
    <property type="match status" value="1"/>
</dbReference>
<dbReference type="Pfam" id="PF01349">
    <property type="entry name" value="Flavi_NS4B"/>
    <property type="match status" value="1"/>
</dbReference>
<dbReference type="Pfam" id="PF00972">
    <property type="entry name" value="Flavi_NS5"/>
    <property type="match status" value="1"/>
</dbReference>
<dbReference type="Pfam" id="PF20483">
    <property type="entry name" value="Flavi_NS5_thumb"/>
    <property type="match status" value="1"/>
</dbReference>
<dbReference type="Pfam" id="PF01570">
    <property type="entry name" value="Flavi_propep"/>
    <property type="match status" value="1"/>
</dbReference>
<dbReference type="Pfam" id="PF01728">
    <property type="entry name" value="FtsJ"/>
    <property type="match status" value="1"/>
</dbReference>
<dbReference type="Pfam" id="PF00949">
    <property type="entry name" value="Peptidase_S7"/>
    <property type="match status" value="1"/>
</dbReference>
<dbReference type="PIRSF" id="PIRSF003817">
    <property type="entry name" value="Gen_Poly_FLV"/>
    <property type="match status" value="1"/>
</dbReference>
<dbReference type="SMART" id="SM00487">
    <property type="entry name" value="DEXDc"/>
    <property type="match status" value="1"/>
</dbReference>
<dbReference type="SMART" id="SM00490">
    <property type="entry name" value="HELICc"/>
    <property type="match status" value="1"/>
</dbReference>
<dbReference type="SUPFAM" id="SSF56672">
    <property type="entry name" value="DNA/RNA polymerases"/>
    <property type="match status" value="1"/>
</dbReference>
<dbReference type="SUPFAM" id="SSF81296">
    <property type="entry name" value="E set domains"/>
    <property type="match status" value="1"/>
</dbReference>
<dbReference type="SUPFAM" id="SSF101257">
    <property type="entry name" value="Flavivirus capsid protein C"/>
    <property type="match status" value="1"/>
</dbReference>
<dbReference type="SUPFAM" id="SSF52540">
    <property type="entry name" value="P-loop containing nucleoside triphosphate hydrolases"/>
    <property type="match status" value="2"/>
</dbReference>
<dbReference type="SUPFAM" id="SSF53335">
    <property type="entry name" value="S-adenosyl-L-methionine-dependent methyltransferases"/>
    <property type="match status" value="1"/>
</dbReference>
<dbReference type="SUPFAM" id="SSF50494">
    <property type="entry name" value="Trypsin-like serine proteases"/>
    <property type="match status" value="1"/>
</dbReference>
<dbReference type="SUPFAM" id="SSF56983">
    <property type="entry name" value="Viral glycoprotein, central and dimerisation domains"/>
    <property type="match status" value="1"/>
</dbReference>
<dbReference type="PROSITE" id="PS51527">
    <property type="entry name" value="FLAVIVIRUS_NS2B"/>
    <property type="match status" value="1"/>
</dbReference>
<dbReference type="PROSITE" id="PS51528">
    <property type="entry name" value="FLAVIVIRUS_NS3PRO"/>
    <property type="match status" value="1"/>
</dbReference>
<dbReference type="PROSITE" id="PS51192">
    <property type="entry name" value="HELICASE_ATP_BIND_1"/>
    <property type="match status" value="1"/>
</dbReference>
<dbReference type="PROSITE" id="PS51194">
    <property type="entry name" value="HELICASE_CTER"/>
    <property type="match status" value="1"/>
</dbReference>
<dbReference type="PROSITE" id="PS50507">
    <property type="entry name" value="RDRP_SSRNA_POS"/>
    <property type="match status" value="1"/>
</dbReference>
<dbReference type="PROSITE" id="PS51591">
    <property type="entry name" value="RNA_CAP01_NS5_MT"/>
    <property type="match status" value="1"/>
</dbReference>
<protein>
    <recommendedName>
        <fullName>Genome polyprotein</fullName>
    </recommendedName>
    <component>
        <recommendedName>
            <fullName>Capsid protein C</fullName>
        </recommendedName>
        <alternativeName>
            <fullName>Core protein</fullName>
        </alternativeName>
    </component>
    <component>
        <recommendedName>
            <fullName>Protein prM</fullName>
        </recommendedName>
    </component>
    <component>
        <recommendedName>
            <fullName>Peptide pr</fullName>
        </recommendedName>
    </component>
    <component>
        <recommendedName>
            <fullName>Small envelope protein M</fullName>
        </recommendedName>
        <alternativeName>
            <fullName>Matrix protein</fullName>
        </alternativeName>
    </component>
    <component>
        <recommendedName>
            <fullName>Envelope protein E</fullName>
        </recommendedName>
    </component>
    <component>
        <recommendedName>
            <fullName>Non-structural protein 1</fullName>
            <shortName>NS1</shortName>
        </recommendedName>
    </component>
    <component>
        <recommendedName>
            <fullName>Non-structural protein 2A</fullName>
            <shortName>NS2A</shortName>
        </recommendedName>
    </component>
    <component>
        <recommendedName>
            <fullName>Serine protease subunit NS2B</fullName>
        </recommendedName>
        <alternativeName>
            <fullName>Flavivirin protease NS2B regulatory subunit</fullName>
        </alternativeName>
        <alternativeName>
            <fullName>Non-structural protein 2B</fullName>
        </alternativeName>
    </component>
    <component>
        <recommendedName>
            <fullName>Serine protease NS3</fullName>
            <ecNumber>3.4.21.91</ecNumber>
            <ecNumber evidence="10">3.6.1.15</ecNumber>
            <ecNumber evidence="10">3.6.4.13</ecNumber>
        </recommendedName>
        <alternativeName>
            <fullName>Flavivirin protease NS3 catalytic subunit</fullName>
        </alternativeName>
        <alternativeName>
            <fullName>Non-structural protein 3</fullName>
        </alternativeName>
    </component>
    <component>
        <recommendedName>
            <fullName>Non-structural protein 4A</fullName>
            <shortName>NS4A</shortName>
        </recommendedName>
    </component>
    <component>
        <recommendedName>
            <fullName>Peptide 2k</fullName>
        </recommendedName>
    </component>
    <component>
        <recommendedName>
            <fullName>Non-structural protein 4B</fullName>
            <shortName>NS4B</shortName>
        </recommendedName>
    </component>
    <component>
        <recommendedName>
            <fullName>RNA-directed RNA polymerase NS5</fullName>
            <ecNumber evidence="18 20">2.1.1.56</ecNumber>
            <ecNumber evidence="18 20">2.1.1.57</ecNumber>
            <ecNumber evidence="13 21">2.7.7.48</ecNumber>
        </recommendedName>
        <alternativeName>
            <fullName>Non-structural protein 5</fullName>
        </alternativeName>
    </component>
</protein>
<organism>
    <name type="scientific">Dengue virus type 3 (strain Philippines/H87/1956)</name>
    <name type="common">DENV-3</name>
    <dbReference type="NCBI Taxonomy" id="408870"/>
    <lineage>
        <taxon>Viruses</taxon>
        <taxon>Riboviria</taxon>
        <taxon>Orthornavirae</taxon>
        <taxon>Kitrinoviricota</taxon>
        <taxon>Flasuviricetes</taxon>
        <taxon>Amarillovirales</taxon>
        <taxon>Flaviviridae</taxon>
        <taxon>Orthoflavivirus</taxon>
        <taxon>Orthoflavivirus denguei</taxon>
        <taxon>Dengue virus</taxon>
    </lineage>
</organism>
<comment type="function">
    <molecule>Capsid protein C</molecule>
    <text evidence="5">Plays a role in virus budding by binding to the cell membrane and gathering the viral RNA into a nucleocapsid that forms the core of a mature virus particle. During virus entry, may induce genome penetration into the host cytoplasm after hemifusion induced by the surface proteins. Can migrate to the cell nucleus where it modulates host functions. Overcomes the anti-viral effects of host EXOC1 by sequestering and degrading the latter through the proteasome degradation pathway.</text>
</comment>
<comment type="function">
    <molecule>Capsid protein C</molecule>
    <text evidence="1">Inhibits RNA silencing by interfering with host Dicer.</text>
</comment>
<comment type="function">
    <molecule>Peptide pr</molecule>
    <text evidence="5">Prevents premature fusion activity of envelope proteins in trans-Golgi by binding to envelope protein E at pH6.0. After virion release in extracellular space, gets dissociated from E dimers.</text>
</comment>
<comment type="function">
    <molecule>Protein prM</molecule>
    <text evidence="5">Acts as a chaperone for envelope protein E during intracellular virion assembly by masking and inactivating envelope protein E fusion peptide. prM is the only viral peptide matured by host furin in the trans-Golgi network probably to avoid catastrophic activation of the viral fusion activity in acidic Golgi compartment prior to virion release. prM-E cleavage is inefficient, and many virions are only partially matured. These uncleaved prM would play a role in immune evasion.</text>
</comment>
<comment type="function">
    <molecule>Small envelope protein M</molecule>
    <text evidence="5">May play a role in virus budding. Exerts cytotoxic effects by activating a mitochondrial apoptotic pathway through M ectodomain. May display a viroporin activity.</text>
</comment>
<comment type="function">
    <molecule>Envelope protein E</molecule>
    <text evidence="5">Binds to host cell surface receptor and mediates fusion between viral and cellular membranes. Envelope protein is synthesized in the endoplasmic reticulum in the form of heterodimer with protein prM. They play a role in virion budding in the ER, and the newly formed immature particle is covered with 60 spikes composed of heterodimer between precursor prM and envelope protein E. The virion is transported to the Golgi apparatus where the low pH causes dissociation of PrM-E heterodimers and formation of E homodimers. prM-E cleavage is inefficient, and many virions are only partially matured. These uncleaved prM would play a role in immune evasion.</text>
</comment>
<comment type="function">
    <molecule>Non-structural protein 1</molecule>
    <text evidence="10">Involved in immune evasion, pathogenesis and viral replication. Once cleaved off the polyprotein, is targeted to three destinations: the viral replication cycle, the plasma membrane and the extracellular compartment. Essential for viral replication. Required for formation of the replication complex and recruitment of other non-structural proteins to the ER-derived membrane structures. Excreted as a hexameric lipoparticle that plays a role against host immune response. Antagonizing the complement function. Binds to the host macrophages and dendritic cells. Inhibits signal transduction originating from Toll-like receptor 3 (TLR3).</text>
</comment>
<comment type="function">
    <molecule>Non-structural protein 1</molecule>
    <text evidence="5">Disrupts the host endothelial glycocalyx layer of host pulmonary microvascular endothelial cells, inducing degradation of sialic acid and shedding of heparan sulfate proteoglycans. NS1 induces expression of sialidases, heparanase, and activates cathepsin L, which activates heparanase via enzymatic cleavage. These effects are probably linked to the endothelial hyperpermeability observed in severe dengue disease.</text>
</comment>
<comment type="function">
    <molecule>Non-structural protein 2A</molecule>
    <text evidence="5">Component of the viral RNA replication complex that functions in virion assembly and antagonizes the host immune response.</text>
</comment>
<comment type="function">
    <molecule>Serine protease subunit NS2B</molecule>
    <text evidence="5 16">Required cofactor for the serine protease function of NS3. May have membrane-destabilizing activity and form viroporins (By similarity).</text>
</comment>
<comment type="function">
    <molecule>Serine protease NS3</molecule>
    <text evidence="17">Displays three enzymatic activities: serine protease, NTPase and RNA helicase. NS3 serine protease, in association with NS2B, performs its autocleavage and cleaves the polyprotein at dibasic sites in the cytoplasm: C-prM, NS2A-NS2B, NS2B-NS3, NS3-NS4A, NS4A-2K and NS4B-NS5. NS3 RNA helicase binds RNA and unwinds dsRNA in the 3' to 5' direction.</text>
</comment>
<comment type="function">
    <molecule>Non-structural protein 4A</molecule>
    <text evidence="5 7 10">Regulates the ATPase activity of the NS3 helicase activity. NS4A allows NS3 helicase to conserve energy during unwinding. Plays a role in the inhibition of the host innate immune response. Interacts with host MAVS and thereby prevents the interaction between RIGI and MAVS. In turn, IFN-beta production is impaired. Interacts with host AUP1 which mediates induction of lipophagy in host cells and facilitates production of virus progeny particles (By similarity).</text>
</comment>
<comment type="function">
    <molecule>Peptide 2k</molecule>
    <text evidence="5">Functions as a signal peptide for NS4B and is required for the interferon antagonism activity of the latter.</text>
</comment>
<comment type="function">
    <molecule>Non-structural protein 4B</molecule>
    <text evidence="10">Induces the formation of ER-derived membrane vesicles where the viral replication takes place. Inhibits interferon (IFN)-induced host STAT1 phosphorylation and nuclear translocation, thereby preventing the establishment of cellular antiviral state by blocking the IFN-alpha/beta pathway.</text>
</comment>
<comment type="function">
    <molecule>RNA-directed RNA polymerase NS5</molecule>
    <text evidence="5">Replicates the viral (+) and (-) RNA genome, and performs the capping of genomes in the cytoplasm. NS5 methylates viral RNA cap at guanine N-7 and ribose 2'-O positions. Besides its role in RNA genome replication, also prevents the establishment of cellular antiviral state by blocking the interferon-alpha/beta (IFN-alpha/beta) signaling pathway. Inhibits host TYK2 and STAT2 phosphorylation, thereby preventing activation of JAK-STAT signaling pathway.</text>
</comment>
<comment type="catalytic activity">
    <reaction>
        <text>Selective hydrolysis of -Xaa-Xaa-|-Yaa- bonds in which each of the Xaa can be either Arg or Lys and Yaa can be either Ser or Ala.</text>
        <dbReference type="EC" id="3.4.21.91"/>
    </reaction>
</comment>
<comment type="catalytic activity">
    <reaction evidence="13 21">
        <text>RNA(n) + a ribonucleoside 5'-triphosphate = RNA(n+1) + diphosphate</text>
        <dbReference type="Rhea" id="RHEA:21248"/>
        <dbReference type="Rhea" id="RHEA-COMP:14527"/>
        <dbReference type="Rhea" id="RHEA-COMP:17342"/>
        <dbReference type="ChEBI" id="CHEBI:33019"/>
        <dbReference type="ChEBI" id="CHEBI:61557"/>
        <dbReference type="ChEBI" id="CHEBI:140395"/>
        <dbReference type="EC" id="2.7.7.48"/>
    </reaction>
</comment>
<comment type="catalytic activity">
    <reaction>
        <text>a ribonucleoside 5'-triphosphate + H2O = a ribonucleoside 5'-diphosphate + phosphate + H(+)</text>
        <dbReference type="Rhea" id="RHEA:23680"/>
        <dbReference type="ChEBI" id="CHEBI:15377"/>
        <dbReference type="ChEBI" id="CHEBI:15378"/>
        <dbReference type="ChEBI" id="CHEBI:43474"/>
        <dbReference type="ChEBI" id="CHEBI:57930"/>
        <dbReference type="ChEBI" id="CHEBI:61557"/>
        <dbReference type="EC" id="3.6.1.15"/>
    </reaction>
</comment>
<comment type="catalytic activity">
    <reaction>
        <text>ATP + H2O = ADP + phosphate + H(+)</text>
        <dbReference type="Rhea" id="RHEA:13065"/>
        <dbReference type="ChEBI" id="CHEBI:15377"/>
        <dbReference type="ChEBI" id="CHEBI:15378"/>
        <dbReference type="ChEBI" id="CHEBI:30616"/>
        <dbReference type="ChEBI" id="CHEBI:43474"/>
        <dbReference type="ChEBI" id="CHEBI:456216"/>
        <dbReference type="EC" id="3.6.4.13"/>
    </reaction>
</comment>
<comment type="catalytic activity">
    <molecule>RNA-directed RNA polymerase NS5</molecule>
    <reaction evidence="18 20">
        <text>a 5'-end (5'-triphosphoguanosine)-ribonucleoside in mRNA + S-adenosyl-L-methionine = a 5'-end (N(7)-methyl 5'-triphosphoguanosine)-ribonucleoside in mRNA + S-adenosyl-L-homocysteine</text>
        <dbReference type="Rhea" id="RHEA:67008"/>
        <dbReference type="Rhea" id="RHEA-COMP:17166"/>
        <dbReference type="Rhea" id="RHEA-COMP:17167"/>
        <dbReference type="ChEBI" id="CHEBI:57856"/>
        <dbReference type="ChEBI" id="CHEBI:59789"/>
        <dbReference type="ChEBI" id="CHEBI:156461"/>
        <dbReference type="ChEBI" id="CHEBI:167617"/>
        <dbReference type="EC" id="2.1.1.56"/>
    </reaction>
</comment>
<comment type="catalytic activity">
    <molecule>RNA-directed RNA polymerase NS5</molecule>
    <reaction evidence="18 20">
        <text>a 5'-end (N(7)-methyl 5'-triphosphoguanosine)-ribonucleoside in mRNA + S-adenosyl-L-methionine = a 5'-end (N(7)-methyl 5'-triphosphoguanosine)-(2'-O-methyl-ribonucleoside) in mRNA + S-adenosyl-L-homocysteine + H(+)</text>
        <dbReference type="Rhea" id="RHEA:67020"/>
        <dbReference type="Rhea" id="RHEA-COMP:17167"/>
        <dbReference type="Rhea" id="RHEA-COMP:17168"/>
        <dbReference type="ChEBI" id="CHEBI:15378"/>
        <dbReference type="ChEBI" id="CHEBI:57856"/>
        <dbReference type="ChEBI" id="CHEBI:59789"/>
        <dbReference type="ChEBI" id="CHEBI:156461"/>
        <dbReference type="ChEBI" id="CHEBI:167609"/>
        <dbReference type="EC" id="2.1.1.57"/>
    </reaction>
</comment>
<comment type="subunit">
    <molecule>Capsid protein C</molecule>
    <text evidence="5">Homodimer. Interacts (via N-terminus) with host EXOC1 (via C-terminus); this interaction results in EXOC1 degradation through the proteasome degradation pathway.</text>
</comment>
<comment type="subunit">
    <molecule>Protein prM</molecule>
    <text evidence="5">Forms heterodimers with envelope protein E in the endoplasmic reticulum and Golgi.</text>
</comment>
<comment type="subunit">
    <molecule>Envelope protein E</molecule>
    <text evidence="5">Homodimer; in the endoplasmic reticulum and Golgi. Interacts with protein prM. Interacts with non-structural protein 1.</text>
</comment>
<comment type="subunit">
    <molecule>Non-structural protein 1</molecule>
    <text evidence="5">Homodimer; Homohexamer when secreted. Interacts with envelope protein E.</text>
</comment>
<comment type="subunit">
    <molecule>Non-structural protein 2A</molecule>
    <text evidence="5">Interacts (via N-terminus) with serine protease NS3.</text>
</comment>
<comment type="subunit">
    <molecule>Serine protease subunit NS2B</molecule>
    <text evidence="5">Forms a heterodimer with serine protease NS3. May form homooligomers.</text>
</comment>
<comment type="subunit">
    <molecule>Serine protease NS3</molecule>
    <text evidence="5">Forms a heterodimer with NS2B. Interacts with NS4B. Interacts with unphosphorylated RNA-directed RNA polymerase NS5; this interaction stimulates RNA-directed RNA polymerase NS5 guanylyltransferase activity. Interacts with host SHFL.</text>
</comment>
<comment type="subunit">
    <molecule>Non-structural protein 4A</molecule>
    <text evidence="5 7">Interacts with host MAVS; this interaction inhibits the synthesis of IFN-beta. Interacts with host SHFL. Interacts with host AUP1; the interaction occurs in the presence of Dengue virus NS4B and induces lipophagy which facilitates production of virus progeny particles (By similarity).</text>
</comment>
<comment type="subunit">
    <molecule>Non-structural protein 4B</molecule>
    <text evidence="5">Interacts with serine protease NS3.</text>
</comment>
<comment type="subunit">
    <molecule>RNA-directed RNA polymerase NS5</molecule>
    <text evidence="5">Homodimer. Interacts with host STAT2; this interaction inhibits the phosphorylation of the latter, and, when all viral proteins are present (polyprotein), targets STAT2 for degradation. Interacts with serine protease NS3.</text>
</comment>
<comment type="subcellular location">
    <molecule>Capsid protein C</molecule>
    <subcellularLocation>
        <location evidence="5">Virion</location>
    </subcellularLocation>
    <subcellularLocation>
        <location evidence="5">Host nucleus</location>
    </subcellularLocation>
    <subcellularLocation>
        <location evidence="5">Host cytoplasm</location>
    </subcellularLocation>
    <subcellularLocation>
        <location evidence="5">Host cytoplasm</location>
        <location evidence="5">Host perinuclear region</location>
    </subcellularLocation>
</comment>
<comment type="subcellular location">
    <molecule>Peptide pr</molecule>
    <subcellularLocation>
        <location evidence="5">Secreted</location>
    </subcellularLocation>
</comment>
<comment type="subcellular location">
    <molecule>Small envelope protein M</molecule>
    <subcellularLocation>
        <location evidence="5">Virion membrane</location>
        <topology evidence="11">Multi-pass membrane protein</topology>
    </subcellularLocation>
    <subcellularLocation>
        <location evidence="5">Host endoplasmic reticulum membrane</location>
        <topology evidence="11">Multi-pass membrane protein</topology>
    </subcellularLocation>
</comment>
<comment type="subcellular location">
    <molecule>Envelope protein E</molecule>
    <subcellularLocation>
        <location evidence="5">Virion membrane</location>
        <topology evidence="11">Multi-pass membrane protein</topology>
    </subcellularLocation>
    <subcellularLocation>
        <location evidence="5">Host endoplasmic reticulum membrane</location>
        <topology evidence="11">Multi-pass membrane protein</topology>
    </subcellularLocation>
</comment>
<comment type="subcellular location">
    <molecule>Non-structural protein 1</molecule>
    <subcellularLocation>
        <location evidence="5">Secreted</location>
    </subcellularLocation>
    <subcellularLocation>
        <location>Host endoplasmic reticulum membrane</location>
        <topology>Peripheral membrane protein</topology>
        <orientation evidence="5">Lumenal side</orientation>
    </subcellularLocation>
    <text evidence="10">Located in RE-derived vesicles hosting the replication complex.</text>
</comment>
<comment type="subcellular location">
    <molecule>Non-structural protein 2A</molecule>
    <subcellularLocation>
        <location evidence="5">Host endoplasmic reticulum membrane</location>
        <topology evidence="5">Multi-pass membrane protein</topology>
    </subcellularLocation>
</comment>
<comment type="subcellular location">
    <molecule>Serine protease subunit NS2B</molecule>
    <subcellularLocation>
        <location>Host endoplasmic reticulum membrane</location>
        <topology evidence="5">Multi-pass membrane protein</topology>
    </subcellularLocation>
</comment>
<comment type="subcellular location">
    <molecule>Serine protease NS3</molecule>
    <subcellularLocation>
        <location evidence="17">Host endoplasmic reticulum membrane</location>
        <topology evidence="17">Peripheral membrane protein</topology>
        <orientation evidence="17">Cytoplasmic side</orientation>
    </subcellularLocation>
    <text evidence="17">Remains non-covalently associated to serine protease subunit NS2B.</text>
</comment>
<comment type="subcellular location">
    <molecule>Non-structural protein 4A</molecule>
    <subcellularLocation>
        <location evidence="5">Host endoplasmic reticulum membrane</location>
        <topology evidence="5">Multi-pass membrane protein</topology>
    </subcellularLocation>
    <subcellularLocation>
        <location evidence="5">Host mitochondrion</location>
    </subcellularLocation>
    <text evidence="5">Located in RE-associated vesicles hosting the replication complex. Interacts with host MAVS in the mitochondrion-associated endoplasmic reticulum membranes.</text>
</comment>
<comment type="subcellular location">
    <molecule>Non-structural protein 4B</molecule>
    <subcellularLocation>
        <location evidence="5">Host endoplasmic reticulum membrane</location>
        <topology evidence="5">Multi-pass membrane protein</topology>
    </subcellularLocation>
    <text evidence="10">Located in RE-derived vesicles hosting the replication complex.</text>
</comment>
<comment type="subcellular location">
    <molecule>RNA-directed RNA polymerase NS5</molecule>
    <subcellularLocation>
        <location>Host endoplasmic reticulum membrane</location>
        <topology>Peripheral membrane protein</topology>
        <orientation>Cytoplasmic side</orientation>
    </subcellularLocation>
    <subcellularLocation>
        <location evidence="5">Host nucleus</location>
    </subcellularLocation>
    <text evidence="5">Located in RE-associated vesicles hosting the replication complex. NS5 protein is mainly localized in the nucleus rather than in ER vesicles, especially in the DENV 2, 3, 4 serotypes.</text>
</comment>
<comment type="domain">
    <text evidence="5">The transmembrane domains of the small envelope protein M and envelope protein E contain an endoplasmic reticulum retention signal.</text>
</comment>
<comment type="PTM">
    <molecule>Genome polyprotein</molecule>
    <text evidence="5">Specific enzymatic cleavages in vivo yield mature proteins. Cleavages in the lumen of endoplasmic reticulum are performed by host signal peptidase, whereas cleavages in the cytoplasmic side are performed by serine protease NS3. Signal cleavage at the 2K-4B site requires a prior NS3 protease-mediated cleavage at the 4A-2K site.</text>
</comment>
<comment type="PTM">
    <molecule>Protein prM</molecule>
    <text evidence="5">Cleaved in post-Golgi vesicles by a host furin, releasing the mature small envelope protein M, and peptide pr. This cleavage is incomplete as up to 30% of viral particles still carry uncleaved prM.</text>
</comment>
<comment type="PTM">
    <molecule>Envelope protein E</molecule>
    <text evidence="5">N-glycosylated.</text>
</comment>
<comment type="PTM">
    <molecule>Non-structural protein 1</molecule>
    <text evidence="5">N-glycosylated. The excreted form is glycosylated and this is required for efficient secretion of the protein from infected cells.</text>
</comment>
<comment type="PTM">
    <molecule>Serine protease NS3</molecule>
    <text evidence="8">Acetylated by host KAT5. Acetylation modulates NS3 RNA-binding and unwinding activities and plays an important positive role for viral replication.</text>
</comment>
<comment type="PTM">
    <molecule>RNA-directed RNA polymerase NS5</molecule>
    <text evidence="6">Sumoylation of RNA-directed RNA polymerase NS5 increases NS5 protein stability allowing proper viral RNA replication.</text>
</comment>
<comment type="PTM">
    <molecule>RNA-directed RNA polymerase NS5</molecule>
    <text evidence="5">Phosphorylated on serines residues. This phosphorylation may trigger NS5 nuclear localization.</text>
</comment>
<comment type="similarity">
    <text evidence="18">In the N-terminal section; belongs to the class I-like SAM-binding methyltransferase superfamily. mRNA cap 0-1 NS5-type methyltransferase family.</text>
</comment>
<accession>P27915</accession>
<organismHost>
    <name type="scientific">Aedimorphus</name>
    <dbReference type="NCBI Taxonomy" id="53540"/>
</organismHost>
<organismHost>
    <name type="scientific">Diceromyia</name>
    <dbReference type="NCBI Taxonomy" id="53539"/>
</organismHost>
<organismHost>
    <name type="scientific">Erythrocebus patas</name>
    <name type="common">Red guenon</name>
    <name type="synonym">Cercopithecus patas</name>
    <dbReference type="NCBI Taxonomy" id="9538"/>
</organismHost>
<organismHost>
    <name type="scientific">Homo sapiens</name>
    <name type="common">Human</name>
    <dbReference type="NCBI Taxonomy" id="9606"/>
</organismHost>
<organismHost>
    <name type="scientific">Stegomyia</name>
    <dbReference type="NCBI Taxonomy" id="53541"/>
</organismHost>